<comment type="function">
    <molecule>Cyclic AMP-responsive element-binding protein 3-like protein 1</molecule>
    <text evidence="6 7 8 11">Precursor of the transcription factor form (Processed cyclic AMP-responsive element-binding protein 3-like protein 1), which is embedded in the endoplasmic reticulum membrane with N-terminal DNA-binding and transcription activation domains oriented toward the cytosolic face of the membrane (PubMed:12054625, PubMed:16417584, PubMed:25310401). In response to ER stress or DNA damage, transported to the Golgi, where it is cleaved in a site-specific manner by resident proteases S1P/MBTPS1 and S2P/MBTPS2. The released N-terminal cytosolic domain is translocated to the nucleus where it activates transcription of specific target genes involved in the cell-cycle progression inhibition (PubMed:12054625, PubMed:21767813, PubMed:25310401).</text>
</comment>
<comment type="function">
    <molecule>Processed cyclic AMP-responsive element-binding protein 3-like protein 1</molecule>
    <text evidence="2 6 8 11">Transcription factor involved in cell type specific DNA damage and unfolded protein response (UPR). Binds the DNA consensus sequence 5'-GTGXGCXGC-3' (PubMed:21767813). Plays a critical role in bone formation through the transcription of COL1A1, and possibly COL1A2, and the secretion of bone matrix proteins. Directly binds to the UPR element (UPRE)-like sequence in an osteoblast-specific COL1A1 promoter region and induces its transcription. Does not regulate COL1A1 in other tissues, such as skin (By similarity). Required to protect astrocytes from ER stress-induced cell death. In astrocytes, binds to the cAMP response element (CRE) of the BiP/HSPA5 promoter and participate in its transcriptional activation (By similarity). In astrocytes and osteoblasts, upon DNA damage, inhibits cell-cycle progression after G2/M phase by binding to promoters and activating transcription of genes encoding cell-cycle inhibitors, such as p21/CDKN1A (By similarity). Required for TGFB1 to activate genes involved in the assembly of collagen extracellular matrix (PubMed:25310401).</text>
</comment>
<comment type="function">
    <text evidence="8">(Microbial infection) May play a role in limiting virus spread by inhibiting proliferation of virus-infected cells. Upon infection with diverse DNA and RNA viruses, inhibits cell-cycle progression by binding to promoters and activating transcription of genes encoding cell-cycle inhibitors, such as p21/CDKN1A (PubMed:21767813).</text>
</comment>
<comment type="subunit">
    <text evidence="11">Interacts with SMAD4, the interaction takes place upon TGFB1 induction and SMAD4 acts as a CREB3L1 coactivator to induce the expression of genes involved in assembly of collagen extracellular matrix.</text>
</comment>
<comment type="interaction">
    <interactant intactId="EBI-6942903">
        <id>Q96BA8</id>
    </interactant>
    <interactant intactId="EBI-10225815">
        <id>Q08AM2</id>
        <label>ADAM33</label>
    </interactant>
    <organismsDiffer>false</organismsDiffer>
    <experiments>3</experiments>
</comment>
<comment type="interaction">
    <interactant intactId="EBI-6942903">
        <id>Q96BA8</id>
    </interactant>
    <interactant intactId="EBI-11277970">
        <id>Q9UHX3</id>
        <label>ADGRE2</label>
    </interactant>
    <organismsDiffer>false</organismsDiffer>
    <experiments>3</experiments>
</comment>
<comment type="interaction">
    <interactant intactId="EBI-6942903">
        <id>Q96BA8</id>
    </interactant>
    <interactant intactId="EBI-10827839">
        <id>Q15848</id>
        <label>ADIPOQ</label>
    </interactant>
    <organismsDiffer>false</organismsDiffer>
    <experiments>3</experiments>
</comment>
<comment type="interaction">
    <interactant intactId="EBI-6942903">
        <id>Q96BA8</id>
    </interactant>
    <interactant intactId="EBI-2803601">
        <id>Q9NRZ7</id>
        <label>AGPAT3</label>
    </interactant>
    <organismsDiffer>false</organismsDiffer>
    <experiments>3</experiments>
</comment>
<comment type="interaction">
    <interactant intactId="EBI-6942903">
        <id>Q96BA8</id>
    </interactant>
    <interactant intactId="EBI-1754287">
        <id>Q9NRZ5</id>
        <label>AGPAT4</label>
    </interactant>
    <organismsDiffer>false</organismsDiffer>
    <experiments>3</experiments>
</comment>
<comment type="interaction">
    <interactant intactId="EBI-6942903">
        <id>Q96BA8</id>
    </interactant>
    <interactant intactId="EBI-6916385">
        <id>Q9NUQ2</id>
        <label>AGPAT5</label>
    </interactant>
    <organismsDiffer>false</organismsDiffer>
    <experiments>3</experiments>
</comment>
<comment type="interaction">
    <interactant intactId="EBI-6942903">
        <id>Q96BA8</id>
    </interactant>
    <interactant intactId="EBI-3921603">
        <id>Q9BVK2</id>
        <label>ALG8</label>
    </interactant>
    <organismsDiffer>false</organismsDiffer>
    <experiments>3</experiments>
</comment>
<comment type="interaction">
    <interactant intactId="EBI-6942903">
        <id>Q96BA8</id>
    </interactant>
    <interactant intactId="EBI-12109402">
        <id>Q86W74-2</id>
        <label>ANKRD46</label>
    </interactant>
    <organismsDiffer>false</organismsDiffer>
    <experiments>3</experiments>
</comment>
<comment type="interaction">
    <interactant intactId="EBI-6942903">
        <id>Q96BA8</id>
    </interactant>
    <interactant intactId="EBI-3921628">
        <id>Q16853</id>
        <label>AOC3</label>
    </interactant>
    <organismsDiffer>false</organismsDiffer>
    <experiments>3</experiments>
</comment>
<comment type="interaction">
    <interactant intactId="EBI-6942903">
        <id>Q96BA8</id>
    </interactant>
    <interactant intactId="EBI-715495">
        <id>P05090</id>
        <label>APOD</label>
    </interactant>
    <organismsDiffer>false</organismsDiffer>
    <experiments>3</experiments>
</comment>
<comment type="interaction">
    <interactant intactId="EBI-6942903">
        <id>Q96BA8</id>
    </interactant>
    <interactant intactId="EBI-12820279">
        <id>Q96PS8</id>
        <label>AQP10</label>
    </interactant>
    <organismsDiffer>false</organismsDiffer>
    <experiments>3</experiments>
</comment>
<comment type="interaction">
    <interactant intactId="EBI-6942903">
        <id>Q96BA8</id>
    </interactant>
    <interactant intactId="EBI-12701138">
        <id>P41181</id>
        <label>AQP2</label>
    </interactant>
    <organismsDiffer>false</organismsDiffer>
    <experiments>3</experiments>
</comment>
<comment type="interaction">
    <interactant intactId="EBI-6942903">
        <id>Q96BA8</id>
    </interactant>
    <interactant intactId="EBI-11724186">
        <id>Q9H2C2</id>
        <label>ARV1</label>
    </interactant>
    <organismsDiffer>false</organismsDiffer>
    <experiments>3</experiments>
</comment>
<comment type="interaction">
    <interactant intactId="EBI-6942903">
        <id>Q96BA8</id>
    </interactant>
    <interactant intactId="EBI-1172335">
        <id>P07306</id>
        <label>ASGR1</label>
    </interactant>
    <organismsDiffer>false</organismsDiffer>
    <experiments>3</experiments>
</comment>
<comment type="interaction">
    <interactant intactId="EBI-6942903">
        <id>Q96BA8</id>
    </interactant>
    <interactant intactId="EBI-749204">
        <id>O15155</id>
        <label>BET1</label>
    </interactant>
    <organismsDiffer>false</organismsDiffer>
    <experiments>3</experiments>
</comment>
<comment type="interaction">
    <interactant intactId="EBI-6942903">
        <id>Q96BA8</id>
    </interactant>
    <interactant intactId="EBI-3922513">
        <id>O95393</id>
        <label>BMP10</label>
    </interactant>
    <organismsDiffer>false</organismsDiffer>
    <experiments>3</experiments>
</comment>
<comment type="interaction">
    <interactant intactId="EBI-6942903">
        <id>Q96BA8</id>
    </interactant>
    <interactant intactId="EBI-749464">
        <id>Q12983</id>
        <label>BNIP3</label>
    </interactant>
    <organismsDiffer>false</organismsDiffer>
    <experiments>3</experiments>
</comment>
<comment type="interaction">
    <interactant intactId="EBI-6942903">
        <id>Q96BA8</id>
    </interactant>
    <interactant intactId="EBI-12244618">
        <id>Q6PL45-2</id>
        <label>BRICD5</label>
    </interactant>
    <organismsDiffer>false</organismsDiffer>
    <experiments>3</experiments>
</comment>
<comment type="interaction">
    <interactant intactId="EBI-6942903">
        <id>Q96BA8</id>
    </interactant>
    <interactant intactId="EBI-2836238">
        <id>Q96F05</id>
        <label>C11orf24</label>
    </interactant>
    <organismsDiffer>false</organismsDiffer>
    <experiments>3</experiments>
</comment>
<comment type="interaction">
    <interactant intactId="EBI-6942903">
        <id>Q96BA8</id>
    </interactant>
    <interactant intactId="EBI-12003442">
        <id>Q8WVX3-2</id>
        <label>C4orf3</label>
    </interactant>
    <organismsDiffer>false</organismsDiffer>
    <experiments>3</experiments>
</comment>
<comment type="interaction">
    <interactant intactId="EBI-6942903">
        <id>Q96BA8</id>
    </interactant>
    <interactant intactId="EBI-8558308">
        <id>P01031</id>
        <label>C5</label>
    </interactant>
    <organismsDiffer>false</organismsDiffer>
    <experiments>3</experiments>
</comment>
<comment type="interaction">
    <interactant intactId="EBI-6942903">
        <id>Q96BA8</id>
    </interactant>
    <interactant intactId="EBI-10271156">
        <id>Q8NHW4</id>
        <label>CCL4L2</label>
    </interactant>
    <organismsDiffer>false</organismsDiffer>
    <experiments>3</experiments>
</comment>
<comment type="interaction">
    <interactant intactId="EBI-6942903">
        <id>Q96BA8</id>
    </interactant>
    <interactant intactId="EBI-6657396">
        <id>P19397</id>
        <label>CD53</label>
    </interactant>
    <organismsDiffer>false</organismsDiffer>
    <experiments>5</experiments>
</comment>
<comment type="interaction">
    <interactant intactId="EBI-6942903">
        <id>Q96BA8</id>
    </interactant>
    <interactant intactId="EBI-307924">
        <id>P21854</id>
        <label>CD72</label>
    </interactant>
    <organismsDiffer>false</organismsDiffer>
    <experiments>5</experiments>
</comment>
<comment type="interaction">
    <interactant intactId="EBI-6942903">
        <id>Q96BA8</id>
    </interactant>
    <interactant intactId="EBI-16434925">
        <id>A0A0S2Z5R8</id>
        <label>CD99L2</label>
    </interactant>
    <organismsDiffer>false</organismsDiffer>
    <experiments>3</experiments>
</comment>
<comment type="interaction">
    <interactant intactId="EBI-6942903">
        <id>Q96BA8</id>
    </interactant>
    <interactant intactId="EBI-11579371">
        <id>Q9BXR6</id>
        <label>CFHR5</label>
    </interactant>
    <organismsDiffer>false</organismsDiffer>
    <experiments>6</experiments>
</comment>
<comment type="interaction">
    <interactant intactId="EBI-6942903">
        <id>Q96BA8</id>
    </interactant>
    <interactant intactId="EBI-349854">
        <id>P13569</id>
        <label>CFTR</label>
    </interactant>
    <organismsDiffer>false</organismsDiffer>
    <experiments>3</experiments>
</comment>
<comment type="interaction">
    <interactant intactId="EBI-6942903">
        <id>Q96BA8</id>
    </interactant>
    <interactant intactId="EBI-752069">
        <id>Q9H5X1</id>
        <label>CIAO2A</label>
    </interactant>
    <organismsDiffer>false</organismsDiffer>
    <experiments>5</experiments>
</comment>
<comment type="interaction">
    <interactant intactId="EBI-6942903">
        <id>Q96BA8</id>
    </interactant>
    <interactant intactId="EBI-6165897">
        <id>Q9NWW5</id>
        <label>CLN6</label>
    </interactant>
    <organismsDiffer>false</organismsDiffer>
    <experiments>5</experiments>
</comment>
<comment type="interaction">
    <interactant intactId="EBI-6942903">
        <id>Q96BA8</id>
    </interactant>
    <interactant intactId="EBI-7247651">
        <id>Q96MX0</id>
        <label>CMTM3</label>
    </interactant>
    <organismsDiffer>false</organismsDiffer>
    <experiments>3</experiments>
</comment>
<comment type="interaction">
    <interactant intactId="EBI-6942903">
        <id>Q96BA8</id>
    </interactant>
    <interactant intactId="EBI-2807956">
        <id>Q96FZ5</id>
        <label>CMTM7</label>
    </interactant>
    <organismsDiffer>false</organismsDiffer>
    <experiments>3</experiments>
</comment>
<comment type="interaction">
    <interactant intactId="EBI-6942903">
        <id>Q96BA8</id>
    </interactant>
    <interactant intactId="EBI-12815321">
        <id>Q6PI25</id>
        <label>CNIH2</label>
    </interactant>
    <organismsDiffer>false</organismsDiffer>
    <experiments>3</experiments>
</comment>
<comment type="interaction">
    <interactant intactId="EBI-6942903">
        <id>Q96BA8</id>
    </interactant>
    <interactant intactId="EBI-10241815">
        <id>Q4VAQ0</id>
        <label>COL8A2</label>
    </interactant>
    <organismsDiffer>false</organismsDiffer>
    <experiments>3</experiments>
</comment>
<comment type="interaction">
    <interactant intactId="EBI-6942903">
        <id>Q96BA8</id>
    </interactant>
    <interactant intactId="EBI-372265">
        <id>P21964</id>
        <label>COMT</label>
    </interactant>
    <organismsDiffer>false</organismsDiffer>
    <experiments>3</experiments>
</comment>
<comment type="interaction">
    <interactant intactId="EBI-6942903">
        <id>Q96BA8</id>
    </interactant>
    <interactant intactId="EBI-2834035">
        <id>Q5RI15</id>
        <label>COX20</label>
    </interactant>
    <organismsDiffer>false</organismsDiffer>
    <experiments>3</experiments>
</comment>
<comment type="interaction">
    <interactant intactId="EBI-6942903">
        <id>Q96BA8</id>
    </interactant>
    <interactant intactId="EBI-852194">
        <id>Q68CJ9</id>
        <label>CREB3L3</label>
    </interactant>
    <organismsDiffer>false</organismsDiffer>
    <experiments>2</experiments>
</comment>
<comment type="interaction">
    <interactant intactId="EBI-6942903">
        <id>Q96BA8</id>
    </interactant>
    <interactant intactId="EBI-10267100">
        <id>Q8N6G5</id>
        <label>CSGALNACT2</label>
    </interactant>
    <organismsDiffer>false</organismsDiffer>
    <experiments>3</experiments>
</comment>
<comment type="interaction">
    <interactant intactId="EBI-6942903">
        <id>Q96BA8</id>
    </interactant>
    <interactant intactId="EBI-12019274">
        <id>Q4LDR2</id>
        <label>CTXN3</label>
    </interactant>
    <organismsDiffer>false</organismsDiffer>
    <experiments>3</experiments>
</comment>
<comment type="interaction">
    <interactant intactId="EBI-6942903">
        <id>Q96BA8</id>
    </interactant>
    <interactant intactId="EBI-717654">
        <id>O14569</id>
        <label>CYB561D2</label>
    </interactant>
    <organismsDiffer>false</organismsDiffer>
    <experiments>3</experiments>
</comment>
<comment type="interaction">
    <interactant intactId="EBI-6942903">
        <id>Q96BA8</id>
    </interactant>
    <interactant intactId="EBI-1752413">
        <id>P78329</id>
        <label>CYP4F2</label>
    </interactant>
    <organismsDiffer>false</organismsDiffer>
    <experiments>3</experiments>
</comment>
<comment type="interaction">
    <interactant intactId="EBI-6942903">
        <id>Q96BA8</id>
    </interactant>
    <interactant intactId="EBI-8645574">
        <id>Q9UPQ8</id>
        <label>DOLK</label>
    </interactant>
    <organismsDiffer>false</organismsDiffer>
    <experiments>3</experiments>
</comment>
<comment type="interaction">
    <interactant intactId="EBI-6942903">
        <id>Q96BA8</id>
    </interactant>
    <interactant intactId="EBI-3915253">
        <id>Q15125</id>
        <label>EBP</label>
    </interactant>
    <organismsDiffer>false</organismsDiffer>
    <experiments>5</experiments>
</comment>
<comment type="interaction">
    <interactant intactId="EBI-6942903">
        <id>Q96BA8</id>
    </interactant>
    <interactant intactId="EBI-3907816">
        <id>P54852</id>
        <label>EMP3</label>
    </interactant>
    <organismsDiffer>false</organismsDiffer>
    <experiments>3</experiments>
</comment>
<comment type="interaction">
    <interactant intactId="EBI-6942903">
        <id>Q96BA8</id>
    </interactant>
    <interactant intactId="EBI-12279764">
        <id>O75355-2</id>
        <label>ENTPD3</label>
    </interactant>
    <organismsDiffer>false</organismsDiffer>
    <experiments>3</experiments>
</comment>
<comment type="interaction">
    <interactant intactId="EBI-6942903">
        <id>Q96BA8</id>
    </interactant>
    <interactant intactId="EBI-711490">
        <id>Q9UKR5</id>
        <label>ERG28</label>
    </interactant>
    <organismsDiffer>false</organismsDiffer>
    <experiments>3</experiments>
</comment>
<comment type="interaction">
    <interactant intactId="EBI-6942903">
        <id>Q96BA8</id>
    </interactant>
    <interactant intactId="EBI-10976398">
        <id>Q7Z2K6</id>
        <label>ERMP1</label>
    </interactant>
    <organismsDiffer>false</organismsDiffer>
    <experiments>3</experiments>
</comment>
<comment type="interaction">
    <interactant intactId="EBI-6942903">
        <id>Q96BA8</id>
    </interactant>
    <interactant intactId="EBI-11337888">
        <id>Q7L5A8</id>
        <label>FA2H</label>
    </interactant>
    <organismsDiffer>false</organismsDiffer>
    <experiments>3</experiments>
</comment>
<comment type="interaction">
    <interactant intactId="EBI-6942903">
        <id>Q96BA8</id>
    </interactant>
    <interactant intactId="EBI-2876774">
        <id>Q92520</id>
        <label>FAM3C</label>
    </interactant>
    <organismsDiffer>false</organismsDiffer>
    <experiments>4</experiments>
</comment>
<comment type="interaction">
    <interactant intactId="EBI-6942903">
        <id>Q96BA8</id>
    </interactant>
    <interactant intactId="EBI-12142299">
        <id>Q96IV6</id>
        <label>FAXDC2</label>
    </interactant>
    <organismsDiffer>false</organismsDiffer>
    <experiments>3</experiments>
</comment>
<comment type="interaction">
    <interactant intactId="EBI-6942903">
        <id>Q96BA8</id>
    </interactant>
    <interactant intactId="EBI-13049494">
        <id>Q9UGM5</id>
        <label>FETUB</label>
    </interactant>
    <organismsDiffer>false</organismsDiffer>
    <experiments>3</experiments>
</comment>
<comment type="interaction">
    <interactant intactId="EBI-6942903">
        <id>Q96BA8</id>
    </interactant>
    <interactant intactId="EBI-12175685">
        <id>Q14802-3</id>
        <label>FXYD3</label>
    </interactant>
    <organismsDiffer>false</organismsDiffer>
    <experiments>3</experiments>
</comment>
<comment type="interaction">
    <interactant intactId="EBI-6942903">
        <id>Q96BA8</id>
    </interactant>
    <interactant intactId="EBI-713304">
        <id>Q9H0Q3</id>
        <label>FXYD6</label>
    </interactant>
    <organismsDiffer>false</organismsDiffer>
    <experiments>6</experiments>
</comment>
<comment type="interaction">
    <interactant intactId="EBI-6942903">
        <id>Q96BA8</id>
    </interactant>
    <interactant intactId="EBI-3436637">
        <id>P01350</id>
        <label>GAST</label>
    </interactant>
    <organismsDiffer>false</organismsDiffer>
    <experiments>5</experiments>
</comment>
<comment type="interaction">
    <interactant intactId="EBI-6942903">
        <id>Q96BA8</id>
    </interactant>
    <interactant intactId="EBI-11991950">
        <id>Q8WWP7</id>
        <label>GIMAP1</label>
    </interactant>
    <organismsDiffer>false</organismsDiffer>
    <experiments>3</experiments>
</comment>
<comment type="interaction">
    <interactant intactId="EBI-6942903">
        <id>Q96BA8</id>
    </interactant>
    <interactant intactId="EBI-6166686">
        <id>Q96F15</id>
        <label>GIMAP5</label>
    </interactant>
    <organismsDiffer>false</organismsDiffer>
    <experiments>3</experiments>
</comment>
<comment type="interaction">
    <interactant intactId="EBI-6942903">
        <id>Q96BA8</id>
    </interactant>
    <interactant intactId="EBI-4402607">
        <id>Q9Y3E0</id>
        <label>GOLT1B</label>
    </interactant>
    <organismsDiffer>false</organismsDiffer>
    <experiments>3</experiments>
</comment>
<comment type="interaction">
    <interactant intactId="EBI-6942903">
        <id>Q96BA8</id>
    </interactant>
    <interactant intactId="EBI-4401517">
        <id>O14653</id>
        <label>GOSR2</label>
    </interactant>
    <organismsDiffer>false</organismsDiffer>
    <experiments>5</experiments>
</comment>
<comment type="interaction">
    <interactant intactId="EBI-6942903">
        <id>Q96BA8</id>
    </interactant>
    <interactant intactId="EBI-11955647">
        <id>Q8TDV0</id>
        <label>GPR151</label>
    </interactant>
    <organismsDiffer>false</organismsDiffer>
    <experiments>3</experiments>
</comment>
<comment type="interaction">
    <interactant intactId="EBI-6942903">
        <id>Q96BA8</id>
    </interactant>
    <interactant intactId="EBI-10178951">
        <id>O00155</id>
        <label>GPR25</label>
    </interactant>
    <organismsDiffer>false</organismsDiffer>
    <experiments>7</experiments>
</comment>
<comment type="interaction">
    <interactant intactId="EBI-6942903">
        <id>Q96BA8</id>
    </interactant>
    <interactant intactId="EBI-2927498">
        <id>O60883</id>
        <label>GPR37L1</label>
    </interactant>
    <organismsDiffer>false</organismsDiffer>
    <experiments>3</experiments>
</comment>
<comment type="interaction">
    <interactant intactId="EBI-6942903">
        <id>Q96BA8</id>
    </interactant>
    <interactant intactId="EBI-530257">
        <id>Q6Y1H2</id>
        <label>HACD2</label>
    </interactant>
    <organismsDiffer>false</organismsDiffer>
    <experiments>3</experiments>
</comment>
<comment type="interaction">
    <interactant intactId="EBI-6942903">
        <id>Q96BA8</id>
    </interactant>
    <interactant intactId="EBI-12838366">
        <id>Q01638-2</id>
        <label>IL1RL1</label>
    </interactant>
    <organismsDiffer>false</organismsDiffer>
    <experiments>3</experiments>
</comment>
<comment type="interaction">
    <interactant intactId="EBI-6942903">
        <id>Q96BA8</id>
    </interactant>
    <interactant intactId="EBI-8503746">
        <id>Q9Y5U4</id>
        <label>INSIG2</label>
    </interactant>
    <organismsDiffer>false</organismsDiffer>
    <experiments>3</experiments>
</comment>
<comment type="interaction">
    <interactant intactId="EBI-6942903">
        <id>Q96BA8</id>
    </interactant>
    <interactant intactId="EBI-2568251">
        <id>P11215</id>
        <label>ITGAM</label>
    </interactant>
    <organismsDiffer>false</organismsDiffer>
    <experiments>3</experiments>
</comment>
<comment type="interaction">
    <interactant intactId="EBI-6942903">
        <id>Q96BA8</id>
    </interactant>
    <interactant intactId="EBI-10266796">
        <id>Q8N5M9</id>
        <label>JAGN1</label>
    </interactant>
    <organismsDiffer>false</organismsDiffer>
    <experiments>3</experiments>
</comment>
<comment type="interaction">
    <interactant intactId="EBI-6942903">
        <id>Q96BA8</id>
    </interactant>
    <interactant intactId="EBI-3914675">
        <id>O00180</id>
        <label>KCNK1</label>
    </interactant>
    <organismsDiffer>false</organismsDiffer>
    <experiments>5</experiments>
</comment>
<comment type="interaction">
    <interactant intactId="EBI-6942903">
        <id>Q96BA8</id>
    </interactant>
    <interactant intactId="EBI-750776">
        <id>O95214</id>
        <label>LEPROTL1</label>
    </interactant>
    <organismsDiffer>false</organismsDiffer>
    <experiments>3</experiments>
</comment>
<comment type="interaction">
    <interactant intactId="EBI-6942903">
        <id>Q96BA8</id>
    </interactant>
    <interactant intactId="EBI-2820517">
        <id>Q8TAF8</id>
        <label>LHFPL5</label>
    </interactant>
    <organismsDiffer>false</organismsDiffer>
    <experiments>3</experiments>
</comment>
<comment type="interaction">
    <interactant intactId="EBI-6942903">
        <id>Q96BA8</id>
    </interactant>
    <interactant intactId="EBI-12033434">
        <id>Q9UBY5</id>
        <label>LPAR3</label>
    </interactant>
    <organismsDiffer>false</organismsDiffer>
    <experiments>5</experiments>
</comment>
<comment type="interaction">
    <interactant intactId="EBI-6942903">
        <id>Q96BA8</id>
    </interactant>
    <interactant intactId="EBI-12241118">
        <id>Q16873</id>
        <label>LTC4S</label>
    </interactant>
    <organismsDiffer>false</organismsDiffer>
    <experiments>5</experiments>
</comment>
<comment type="interaction">
    <interactant intactId="EBI-6942903">
        <id>Q96BA8</id>
    </interactant>
    <interactant intactId="EBI-3932027">
        <id>P21145</id>
        <label>MAL</label>
    </interactant>
    <organismsDiffer>false</organismsDiffer>
    <experiments>3</experiments>
</comment>
<comment type="interaction">
    <interactant intactId="EBI-6942903">
        <id>Q96BA8</id>
    </interactant>
    <interactant intactId="EBI-944295">
        <id>Q969L2</id>
        <label>MAL2</label>
    </interactant>
    <organismsDiffer>false</organismsDiffer>
    <experiments>3</experiments>
</comment>
<comment type="interaction">
    <interactant intactId="EBI-6942903">
        <id>Q96BA8</id>
    </interactant>
    <interactant intactId="EBI-750078">
        <id>Q13021</id>
        <label>MALL</label>
    </interactant>
    <organismsDiffer>false</organismsDiffer>
    <experiments>3</experiments>
</comment>
<comment type="interaction">
    <interactant intactId="EBI-6942903">
        <id>Q96BA8</id>
    </interactant>
    <interactant intactId="EBI-12243024">
        <id>Q9Y2E5</id>
        <label>MAN2B2</label>
    </interactant>
    <organismsDiffer>false</organismsDiffer>
    <experiments>3</experiments>
</comment>
<comment type="interaction">
    <interactant intactId="EBI-6942903">
        <id>Q96BA8</id>
    </interactant>
    <interactant intactId="EBI-10317612">
        <id>Q9P0N8</id>
        <label>MARCHF2</label>
    </interactant>
    <organismsDiffer>false</organismsDiffer>
    <experiments>3</experiments>
</comment>
<comment type="interaction">
    <interactant intactId="EBI-6942903">
        <id>Q96BA8</id>
    </interactant>
    <interactant intactId="EBI-3920969">
        <id>Q6N075</id>
        <label>MFSD5</label>
    </interactant>
    <organismsDiffer>false</organismsDiffer>
    <experiments>6</experiments>
</comment>
<comment type="interaction">
    <interactant intactId="EBI-6942903">
        <id>Q96BA8</id>
    </interactant>
    <interactant intactId="EBI-2829774">
        <id>O43451</id>
        <label>MGAM</label>
    </interactant>
    <organismsDiffer>false</organismsDiffer>
    <experiments>3</experiments>
</comment>
<comment type="interaction">
    <interactant intactId="EBI-6942903">
        <id>Q96BA8</id>
    </interactant>
    <interactant intactId="EBI-11324706">
        <id>Q99735</id>
        <label>MGST2</label>
    </interactant>
    <organismsDiffer>false</organismsDiffer>
    <experiments>3</experiments>
</comment>
<comment type="interaction">
    <interactant intactId="EBI-6942903">
        <id>Q96BA8</id>
    </interactant>
    <interactant intactId="EBI-724754">
        <id>O14880</id>
        <label>MGST3</label>
    </interactant>
    <organismsDiffer>false</organismsDiffer>
    <experiments>3</experiments>
</comment>
<comment type="interaction">
    <interactant intactId="EBI-6942903">
        <id>Q96BA8</id>
    </interactant>
    <interactant intactId="EBI-13349813">
        <id>Q8IY49-2</id>
        <label>MMD2</label>
    </interactant>
    <organismsDiffer>false</organismsDiffer>
    <experiments>3</experiments>
</comment>
<comment type="interaction">
    <interactant intactId="EBI-6942903">
        <id>Q96BA8</id>
    </interactant>
    <interactant intactId="EBI-2808234">
        <id>P11836</id>
        <label>MS4A1</label>
    </interactant>
    <organismsDiffer>false</organismsDiffer>
    <experiments>3</experiments>
</comment>
<comment type="interaction">
    <interactant intactId="EBI-6942903">
        <id>Q96BA8</id>
    </interactant>
    <interactant intactId="EBI-12070086">
        <id>Q5J8X5</id>
        <label>MS4A13</label>
    </interactant>
    <organismsDiffer>false</organismsDiffer>
    <experiments>3</experiments>
</comment>
<comment type="interaction">
    <interactant intactId="EBI-6942903">
        <id>Q96BA8</id>
    </interactant>
    <interactant intactId="EBI-3921185">
        <id>Q9H115</id>
        <label>NAPB</label>
    </interactant>
    <organismsDiffer>false</organismsDiffer>
    <experiments>3</experiments>
</comment>
<comment type="interaction">
    <interactant intactId="EBI-6942903">
        <id>Q96BA8</id>
    </interactant>
    <interactant intactId="EBI-2863634">
        <id>Q9UHE5</id>
        <label>NAT8</label>
    </interactant>
    <organismsDiffer>false</organismsDiffer>
    <experiments>3</experiments>
</comment>
<comment type="interaction">
    <interactant intactId="EBI-6942903">
        <id>Q96BA8</id>
    </interactant>
    <interactant intactId="EBI-721517">
        <id>Q99519</id>
        <label>NEU1</label>
    </interactant>
    <organismsDiffer>false</organismsDiffer>
    <experiments>5</experiments>
</comment>
<comment type="interaction">
    <interactant intactId="EBI-6942903">
        <id>Q96BA8</id>
    </interactant>
    <interactant intactId="EBI-2802124">
        <id>Q92982</id>
        <label>NINJ1</label>
    </interactant>
    <organismsDiffer>false</organismsDiffer>
    <experiments>3</experiments>
</comment>
<comment type="interaction">
    <interactant intactId="EBI-6942903">
        <id>Q96BA8</id>
    </interactant>
    <interactant intactId="EBI-10317425">
        <id>Q9NZG7</id>
        <label>NINJ2</label>
    </interactant>
    <organismsDiffer>false</organismsDiffer>
    <experiments>3</experiments>
</comment>
<comment type="interaction">
    <interactant intactId="EBI-6942903">
        <id>Q96BA8</id>
    </interactant>
    <interactant intactId="EBI-10262547">
        <id>Q8IXM6</id>
        <label>NRM</label>
    </interactant>
    <organismsDiffer>false</organismsDiffer>
    <experiments>3</experiments>
</comment>
<comment type="interaction">
    <interactant intactId="EBI-6942903">
        <id>Q96BA8</id>
    </interactant>
    <interactant intactId="EBI-6380741">
        <id>P42857</id>
        <label>NSG1</label>
    </interactant>
    <organismsDiffer>false</organismsDiffer>
    <experiments>3</experiments>
</comment>
<comment type="interaction">
    <interactant intactId="EBI-6942903">
        <id>Q96BA8</id>
    </interactant>
    <interactant intactId="EBI-2804156">
        <id>Q6UX06</id>
        <label>OLFM4</label>
    </interactant>
    <organismsDiffer>false</organismsDiffer>
    <experiments>3</experiments>
</comment>
<comment type="interaction">
    <interactant intactId="EBI-6942903">
        <id>Q96BA8</id>
    </interactant>
    <interactant intactId="EBI-13339917">
        <id>Q8NH19</id>
        <label>OR10AG1</label>
    </interactant>
    <organismsDiffer>false</organismsDiffer>
    <experiments>3</experiments>
</comment>
<comment type="interaction">
    <interactant intactId="EBI-6942903">
        <id>Q96BA8</id>
    </interactant>
    <interactant intactId="EBI-1054848">
        <id>Q9P0S3</id>
        <label>ORMDL1</label>
    </interactant>
    <organismsDiffer>false</organismsDiffer>
    <experiments>3</experiments>
</comment>
<comment type="interaction">
    <interactant intactId="EBI-6942903">
        <id>Q96BA8</id>
    </interactant>
    <interactant intactId="EBI-11075081">
        <id>Q53FV1</id>
        <label>ORMDL2</label>
    </interactant>
    <organismsDiffer>false</organismsDiffer>
    <experiments>3</experiments>
</comment>
<comment type="interaction">
    <interactant intactId="EBI-6942903">
        <id>Q96BA8</id>
    </interactant>
    <interactant intactId="EBI-17265310">
        <id>Q6TCH4</id>
        <label>PAQR6</label>
    </interactant>
    <organismsDiffer>false</organismsDiffer>
    <experiments>3</experiments>
</comment>
<comment type="interaction">
    <interactant intactId="EBI-6942903">
        <id>Q96BA8</id>
    </interactant>
    <interactant intactId="EBI-12213001">
        <id>I3L0A0</id>
        <label>PEDS1-UBE2V1</label>
    </interactant>
    <organismsDiffer>false</organismsDiffer>
    <experiments>3</experiments>
</comment>
<comment type="interaction">
    <interactant intactId="EBI-6942903">
        <id>Q96BA8</id>
    </interactant>
    <interactant intactId="EBI-981985">
        <id>Q9Y5Y5</id>
        <label>PEX16</label>
    </interactant>
    <organismsDiffer>false</organismsDiffer>
    <experiments>3</experiments>
</comment>
<comment type="interaction">
    <interactant intactId="EBI-6942903">
        <id>Q96BA8</id>
    </interactant>
    <interactant intactId="EBI-16438210">
        <id>E9PRZ2</id>
        <label>PGAP2</label>
    </interactant>
    <organismsDiffer>false</organismsDiffer>
    <experiments>3</experiments>
</comment>
<comment type="interaction">
    <interactant intactId="EBI-6942903">
        <id>Q96BA8</id>
    </interactant>
    <interactant intactId="EBI-10321427">
        <id>Q9UHJ9</id>
        <label>PGAP2</label>
    </interactant>
    <organismsDiffer>false</organismsDiffer>
    <experiments>3</experiments>
</comment>
<comment type="interaction">
    <interactant intactId="EBI-6942903">
        <id>Q96BA8</id>
    </interactant>
    <interactant intactId="EBI-12092917">
        <id>Q9UHJ9-5</id>
        <label>PGAP2</label>
    </interactant>
    <organismsDiffer>false</organismsDiffer>
    <experiments>6</experiments>
</comment>
<comment type="interaction">
    <interactant intactId="EBI-6942903">
        <id>Q96BA8</id>
    </interactant>
    <interactant intactId="EBI-10249941">
        <id>Q6IB11</id>
        <label>PGRMC1</label>
    </interactant>
    <organismsDiffer>false</organismsDiffer>
    <experiments>3</experiments>
</comment>
<comment type="interaction">
    <interactant intactId="EBI-6942903">
        <id>Q96BA8</id>
    </interactant>
    <interactant intactId="EBI-692836">
        <id>P26678</id>
        <label>PLN</label>
    </interactant>
    <organismsDiffer>false</organismsDiffer>
    <experiments>3</experiments>
</comment>
<comment type="interaction">
    <interactant intactId="EBI-6942903">
        <id>Q96BA8</id>
    </interactant>
    <interactant intactId="EBI-8653150">
        <id>P60201</id>
        <label>PLP1</label>
    </interactant>
    <organismsDiffer>false</organismsDiffer>
    <experiments>3</experiments>
</comment>
<comment type="interaction">
    <interactant intactId="EBI-6942903">
        <id>Q96BA8</id>
    </interactant>
    <interactant intactId="EBI-12188331">
        <id>P60201-2</id>
        <label>PLP1</label>
    </interactant>
    <organismsDiffer>false</organismsDiffer>
    <experiments>16</experiments>
</comment>
<comment type="interaction">
    <interactant intactId="EBI-6942903">
        <id>Q96BA8</id>
    </interactant>
    <interactant intactId="EBI-608347">
        <id>Q04941</id>
        <label>PLP2</label>
    </interactant>
    <organismsDiffer>false</organismsDiffer>
    <experiments>3</experiments>
</comment>
<comment type="interaction">
    <interactant intactId="EBI-6942903">
        <id>Q96BA8</id>
    </interactant>
    <interactant intactId="EBI-10485931">
        <id>Q5VZY2</id>
        <label>PLPP4</label>
    </interactant>
    <organismsDiffer>false</organismsDiffer>
    <experiments>3</experiments>
</comment>
<comment type="interaction">
    <interactant intactId="EBI-6942903">
        <id>Q96BA8</id>
    </interactant>
    <interactant intactId="EBI-11721828">
        <id>Q8IY26</id>
        <label>PLPP6</label>
    </interactant>
    <organismsDiffer>false</organismsDiffer>
    <experiments>5</experiments>
</comment>
<comment type="interaction">
    <interactant intactId="EBI-6942903">
        <id>Q96BA8</id>
    </interactant>
    <interactant intactId="EBI-12955265">
        <id>Q96GM1</id>
        <label>PLPPR2</label>
    </interactant>
    <organismsDiffer>false</organismsDiffer>
    <experiments>3</experiments>
</comment>
<comment type="interaction">
    <interactant intactId="EBI-6942903">
        <id>Q96BA8</id>
    </interactant>
    <interactant intactId="EBI-2845982">
        <id>Q01453</id>
        <label>PMP22</label>
    </interactant>
    <organismsDiffer>false</organismsDiffer>
    <experiments>3</experiments>
</comment>
<comment type="interaction">
    <interactant intactId="EBI-6942903">
        <id>Q96BA8</id>
    </interactant>
    <interactant intactId="EBI-14210385">
        <id>Q59EV6</id>
        <label>PPGB</label>
    </interactant>
    <organismsDiffer>false</organismsDiffer>
    <experiments>3</experiments>
</comment>
<comment type="interaction">
    <interactant intactId="EBI-6942903">
        <id>Q96BA8</id>
    </interactant>
    <interactant intactId="EBI-1053424">
        <id>O43741</id>
        <label>PRKAB2</label>
    </interactant>
    <organismsDiffer>false</organismsDiffer>
    <experiments>4</experiments>
</comment>
<comment type="interaction">
    <interactant intactId="EBI-6942903">
        <id>Q96BA8</id>
    </interactant>
    <interactant intactId="EBI-742898">
        <id>P43378</id>
        <label>PTPN9</label>
    </interactant>
    <organismsDiffer>false</organismsDiffer>
    <experiments>3</experiments>
</comment>
<comment type="interaction">
    <interactant intactId="EBI-6942903">
        <id>Q96BA8</id>
    </interactant>
    <interactant intactId="EBI-6269616">
        <id>Q96AA3</id>
        <label>RFT1</label>
    </interactant>
    <organismsDiffer>false</organismsDiffer>
    <experiments>3</experiments>
</comment>
<comment type="interaction">
    <interactant intactId="EBI-6942903">
        <id>Q96BA8</id>
    </interactant>
    <interactant intactId="EBI-9916444">
        <id>Q8TEB9</id>
        <label>RHBDD1</label>
    </interactant>
    <organismsDiffer>false</organismsDiffer>
    <experiments>3</experiments>
</comment>
<comment type="interaction">
    <interactant intactId="EBI-6942903">
        <id>Q96BA8</id>
    </interactant>
    <interactant intactId="EBI-17249212">
        <id>Q02161-2</id>
        <label>RHD</label>
    </interactant>
    <organismsDiffer>false</organismsDiffer>
    <experiments>3</experiments>
</comment>
<comment type="interaction">
    <interactant intactId="EBI-6942903">
        <id>Q96BA8</id>
    </interactant>
    <interactant intactId="EBI-12423312">
        <id>Q5GAN6</id>
        <label>RNASE10</label>
    </interactant>
    <organismsDiffer>false</organismsDiffer>
    <experiments>3</experiments>
</comment>
<comment type="interaction">
    <interactant intactId="EBI-6942903">
        <id>Q96BA8</id>
    </interactant>
    <interactant intactId="EBI-10224192">
        <id>Q06455-4</id>
        <label>RUNX1T1</label>
    </interactant>
    <organismsDiffer>false</organismsDiffer>
    <experiments>3</experiments>
</comment>
<comment type="interaction">
    <interactant intactId="EBI-6942903">
        <id>Q96BA8</id>
    </interactant>
    <interactant intactId="EBI-8636004">
        <id>Q96GQ5</id>
        <label>RUSF1</label>
    </interactant>
    <organismsDiffer>false</organismsDiffer>
    <experiments>3</experiments>
</comment>
<comment type="interaction">
    <interactant intactId="EBI-6942903">
        <id>Q96BA8</id>
    </interactant>
    <interactant intactId="EBI-3917235">
        <id>Q9NTJ5</id>
        <label>SACM1L</label>
    </interactant>
    <organismsDiffer>false</organismsDiffer>
    <experiments>6</experiments>
</comment>
<comment type="interaction">
    <interactant intactId="EBI-6942903">
        <id>Q96BA8</id>
    </interactant>
    <interactant intactId="EBI-12056025">
        <id>Q14162</id>
        <label>SCARF1</label>
    </interactant>
    <organismsDiffer>false</organismsDiffer>
    <experiments>3</experiments>
</comment>
<comment type="interaction">
    <interactant intactId="EBI-6942903">
        <id>Q96BA8</id>
    </interactant>
    <interactant intactId="EBI-2684237">
        <id>O00767</id>
        <label>SCD</label>
    </interactant>
    <organismsDiffer>false</organismsDiffer>
    <experiments>3</experiments>
</comment>
<comment type="interaction">
    <interactant intactId="EBI-6942903">
        <id>Q96BA8</id>
    </interactant>
    <interactant intactId="EBI-12825395">
        <id>O95968</id>
        <label>SCGB1D1</label>
    </interactant>
    <organismsDiffer>false</organismsDiffer>
    <experiments>3</experiments>
</comment>
<comment type="interaction">
    <interactant intactId="EBI-6942903">
        <id>Q96BA8</id>
    </interactant>
    <interactant intactId="EBI-8652744">
        <id>Q96IW7</id>
        <label>SEC22A</label>
    </interactant>
    <organismsDiffer>false</organismsDiffer>
    <experiments>3</experiments>
</comment>
<comment type="interaction">
    <interactant intactId="EBI-6942903">
        <id>Q96BA8</id>
    </interactant>
    <interactant intactId="EBI-1058865">
        <id>O75396</id>
        <label>SEC22B</label>
    </interactant>
    <organismsDiffer>false</organismsDiffer>
    <experiments>3</experiments>
</comment>
<comment type="interaction">
    <interactant intactId="EBI-6942903">
        <id>Q96BA8</id>
    </interactant>
    <interactant intactId="EBI-4402709">
        <id>P60059</id>
        <label>SEC61G</label>
    </interactant>
    <organismsDiffer>false</organismsDiffer>
    <experiments>5</experiments>
</comment>
<comment type="interaction">
    <interactant intactId="EBI-6942903">
        <id>Q96BA8</id>
    </interactant>
    <interactant intactId="EBI-12913124">
        <id>Q9NTN9-2</id>
        <label>SEMA4G</label>
    </interactant>
    <organismsDiffer>false</organismsDiffer>
    <experiments>5</experiments>
</comment>
<comment type="interaction">
    <interactant intactId="EBI-6942903">
        <id>Q96BA8</id>
    </interactant>
    <interactant intactId="EBI-17274136">
        <id>Q8TD22</id>
        <label>SFXN5</label>
    </interactant>
    <organismsDiffer>false</organismsDiffer>
    <experiments>3</experiments>
</comment>
<comment type="interaction">
    <interactant intactId="EBI-6942903">
        <id>Q96BA8</id>
    </interactant>
    <interactant intactId="EBI-17460043">
        <id>Q13183</id>
        <label>SLC13A2</label>
    </interactant>
    <organismsDiffer>false</organismsDiffer>
    <experiments>3</experiments>
</comment>
<comment type="interaction">
    <interactant intactId="EBI-6942903">
        <id>Q96BA8</id>
    </interactant>
    <interactant intactId="EBI-12938720">
        <id>Q8WWT9</id>
        <label>SLC13A3</label>
    </interactant>
    <organismsDiffer>false</organismsDiffer>
    <experiments>3</experiments>
</comment>
<comment type="interaction">
    <interactant intactId="EBI-6942903">
        <id>Q96BA8</id>
    </interactant>
    <interactant intactId="EBI-12243266">
        <id>Q7RTY0</id>
        <label>SLC16A13</label>
    </interactant>
    <organismsDiffer>false</organismsDiffer>
    <experiments>3</experiments>
</comment>
<comment type="interaction">
    <interactant intactId="EBI-6942903">
        <id>Q96BA8</id>
    </interactant>
    <interactant intactId="EBI-725116">
        <id>P11169</id>
        <label>SLC2A3</label>
    </interactant>
    <organismsDiffer>false</organismsDiffer>
    <experiments>3</experiments>
</comment>
<comment type="interaction">
    <interactant intactId="EBI-6942903">
        <id>Q96BA8</id>
    </interactant>
    <interactant intactId="EBI-10262251">
        <id>Q8IWU4</id>
        <label>SLC30A8</label>
    </interactant>
    <organismsDiffer>false</organismsDiffer>
    <experiments>9</experiments>
</comment>
<comment type="interaction">
    <interactant intactId="EBI-6942903">
        <id>Q96BA8</id>
    </interactant>
    <interactant intactId="EBI-12363689">
        <id>Q96G79</id>
        <label>SLC35A4</label>
    </interactant>
    <organismsDiffer>false</organismsDiffer>
    <experiments>3</experiments>
</comment>
<comment type="interaction">
    <interactant intactId="EBI-6942903">
        <id>Q96BA8</id>
    </interactant>
    <interactant intactId="EBI-12147661">
        <id>P78383</id>
        <label>SLC35B1</label>
    </interactant>
    <organismsDiffer>false</organismsDiffer>
    <experiments>3</experiments>
</comment>
<comment type="interaction">
    <interactant intactId="EBI-6942903">
        <id>Q96BA8</id>
    </interactant>
    <interactant intactId="EBI-1054782">
        <id>Q8TB61</id>
        <label>SLC35B2</label>
    </interactant>
    <organismsDiffer>false</organismsDiffer>
    <experiments>5</experiments>
</comment>
<comment type="interaction">
    <interactant intactId="EBI-6942903">
        <id>Q96BA8</id>
    </interactant>
    <interactant intactId="EBI-10281213">
        <id>Q969S0</id>
        <label>SLC35B4</label>
    </interactant>
    <organismsDiffer>false</organismsDiffer>
    <experiments>8</experiments>
</comment>
<comment type="interaction">
    <interactant intactId="EBI-6942903">
        <id>Q96BA8</id>
    </interactant>
    <interactant intactId="EBI-17295964">
        <id>Q9NQQ7-3</id>
        <label>SLC35C2</label>
    </interactant>
    <organismsDiffer>false</organismsDiffer>
    <experiments>3</experiments>
</comment>
<comment type="interaction">
    <interactant intactId="EBI-6942903">
        <id>Q96BA8</id>
    </interactant>
    <interactant intactId="EBI-12898013">
        <id>Q9NP94</id>
        <label>SLC39A2</label>
    </interactant>
    <organismsDiffer>false</organismsDiffer>
    <experiments>3</experiments>
</comment>
<comment type="interaction">
    <interactant intactId="EBI-6942903">
        <id>Q96BA8</id>
    </interactant>
    <interactant intactId="EBI-2823239">
        <id>Q9NUM3</id>
        <label>SLC39A9</label>
    </interactant>
    <organismsDiffer>false</organismsDiffer>
    <experiments>3</experiments>
</comment>
<comment type="interaction">
    <interactant intactId="EBI-6942903">
        <id>Q96BA8</id>
    </interactant>
    <interactant intactId="EBI-12904614">
        <id>Q9NWF4</id>
        <label>SLC52A1</label>
    </interactant>
    <organismsDiffer>false</organismsDiffer>
    <experiments>3</experiments>
</comment>
<comment type="interaction">
    <interactant intactId="EBI-6942903">
        <id>Q96BA8</id>
    </interactant>
    <interactant intactId="EBI-4289564">
        <id>P30825</id>
        <label>SLC7A1</label>
    </interactant>
    <organismsDiffer>false</organismsDiffer>
    <experiments>5</experiments>
</comment>
<comment type="interaction">
    <interactant intactId="EBI-6942903">
        <id>Q96BA8</id>
    </interactant>
    <interactant intactId="EBI-8640191">
        <id>Q9NRQ5</id>
        <label>SMCO4</label>
    </interactant>
    <organismsDiffer>false</organismsDiffer>
    <experiments>3</experiments>
</comment>
<comment type="interaction">
    <interactant intactId="EBI-6942903">
        <id>Q96BA8</id>
    </interactant>
    <interactant intactId="EBI-12188413">
        <id>B2RUZ4</id>
        <label>SMIM1</label>
    </interactant>
    <organismsDiffer>false</organismsDiffer>
    <experiments>3</experiments>
</comment>
<comment type="interaction">
    <interactant intactId="EBI-6942903">
        <id>Q96BA8</id>
    </interactant>
    <interactant intactId="EBI-2682560">
        <id>Q08629</id>
        <label>SPOCK1</label>
    </interactant>
    <organismsDiffer>false</organismsDiffer>
    <experiments>3</experiments>
</comment>
<comment type="interaction">
    <interactant intactId="EBI-6942903">
        <id>Q96BA8</id>
    </interactant>
    <interactant intactId="EBI-3905171">
        <id>Q14534</id>
        <label>SQLE</label>
    </interactant>
    <organismsDiffer>false</organismsDiffer>
    <experiments>3</experiments>
</comment>
<comment type="interaction">
    <interactant intactId="EBI-6942903">
        <id>Q96BA8</id>
    </interactant>
    <interactant intactId="EBI-1394295">
        <id>Q13277</id>
        <label>STX3</label>
    </interactant>
    <organismsDiffer>false</organismsDiffer>
    <experiments>3</experiments>
</comment>
<comment type="interaction">
    <interactant intactId="EBI-6942903">
        <id>Q96BA8</id>
    </interactant>
    <interactant intactId="EBI-3221827">
        <id>O15400</id>
        <label>STX7</label>
    </interactant>
    <organismsDiffer>false</organismsDiffer>
    <experiments>5</experiments>
</comment>
<comment type="interaction">
    <interactant intactId="EBI-6942903">
        <id>Q96BA8</id>
    </interactant>
    <interactant intactId="EBI-727240">
        <id>Q9UNK0</id>
        <label>STX8</label>
    </interactant>
    <organismsDiffer>false</organismsDiffer>
    <experiments>5</experiments>
</comment>
<comment type="interaction">
    <interactant intactId="EBI-6942903">
        <id>Q96BA8</id>
    </interactant>
    <interactant intactId="EBI-12187159">
        <id>O43759-2</id>
        <label>SYNGR1</label>
    </interactant>
    <organismsDiffer>false</organismsDiffer>
    <experiments>3</experiments>
</comment>
<comment type="interaction">
    <interactant intactId="EBI-6942903">
        <id>Q96BA8</id>
    </interactant>
    <interactant intactId="EBI-1049004">
        <id>P57105</id>
        <label>SYNJ2BP</label>
    </interactant>
    <organismsDiffer>false</organismsDiffer>
    <experiments>3</experiments>
</comment>
<comment type="interaction">
    <interactant intactId="EBI-6942903">
        <id>Q96BA8</id>
    </interactant>
    <interactant intactId="EBI-2877718">
        <id>Q9NZ01</id>
        <label>TECR</label>
    </interactant>
    <organismsDiffer>false</organismsDiffer>
    <experiments>3</experiments>
</comment>
<comment type="interaction">
    <interactant intactId="EBI-6942903">
        <id>Q96BA8</id>
    </interactant>
    <interactant intactId="EBI-10329860">
        <id>Q9Y6I9</id>
        <label>TEX264</label>
    </interactant>
    <organismsDiffer>false</organismsDiffer>
    <experiments>3</experiments>
</comment>
<comment type="interaction">
    <interactant intactId="EBI-6942903">
        <id>Q96BA8</id>
    </interactant>
    <interactant intactId="EBI-355727">
        <id>P02786</id>
        <label>TFRC</label>
    </interactant>
    <organismsDiffer>false</organismsDiffer>
    <experiments>3</experiments>
</comment>
<comment type="interaction">
    <interactant intactId="EBI-6942903">
        <id>Q96BA8</id>
    </interactant>
    <interactant intactId="EBI-1047996">
        <id>O14925</id>
        <label>TIMM23</label>
    </interactant>
    <organismsDiffer>false</organismsDiffer>
    <experiments>3</experiments>
</comment>
<comment type="interaction">
    <interactant intactId="EBI-6942903">
        <id>Q96BA8</id>
    </interactant>
    <interactant intactId="EBI-6268651">
        <id>Q9NPL8</id>
        <label>TIMMDC1</label>
    </interactant>
    <organismsDiffer>false</organismsDiffer>
    <experiments>3</experiments>
</comment>
<comment type="interaction">
    <interactant intactId="EBI-6942903">
        <id>Q96BA8</id>
    </interactant>
    <interactant intactId="EBI-11337932">
        <id>Q96CP7</id>
        <label>TLCD1</label>
    </interactant>
    <organismsDiffer>false</organismsDiffer>
    <experiments>3</experiments>
</comment>
<comment type="interaction">
    <interactant intactId="EBI-6942903">
        <id>Q96BA8</id>
    </interactant>
    <interactant intactId="EBI-1045825">
        <id>P55061</id>
        <label>TMBIM6</label>
    </interactant>
    <organismsDiffer>false</organismsDiffer>
    <experiments>3</experiments>
</comment>
<comment type="interaction">
    <interactant intactId="EBI-6942903">
        <id>Q96BA8</id>
    </interactant>
    <interactant intactId="EBI-723946">
        <id>P17152</id>
        <label>TMEM11</label>
    </interactant>
    <organismsDiffer>false</organismsDiffer>
    <experiments>6</experiments>
</comment>
<comment type="interaction">
    <interactant intactId="EBI-6942903">
        <id>Q96BA8</id>
    </interactant>
    <interactant intactId="EBI-10171534">
        <id>A0PK00</id>
        <label>TMEM120B</label>
    </interactant>
    <organismsDiffer>false</organismsDiffer>
    <experiments>5</experiments>
</comment>
<comment type="interaction">
    <interactant intactId="EBI-6942903">
        <id>Q96BA8</id>
    </interactant>
    <interactant intactId="EBI-348587">
        <id>Q9BVK8</id>
        <label>TMEM147</label>
    </interactant>
    <organismsDiffer>false</organismsDiffer>
    <experiments>9</experiments>
</comment>
<comment type="interaction">
    <interactant intactId="EBI-6942903">
        <id>Q96BA8</id>
    </interactant>
    <interactant intactId="EBI-2800360">
        <id>Q9Y6G1</id>
        <label>TMEM14A</label>
    </interactant>
    <organismsDiffer>false</organismsDiffer>
    <experiments>5</experiments>
</comment>
<comment type="interaction">
    <interactant intactId="EBI-6942903">
        <id>Q96BA8</id>
    </interactant>
    <interactant intactId="EBI-8638294">
        <id>Q9NUH8</id>
        <label>TMEM14B</label>
    </interactant>
    <organismsDiffer>false</organismsDiffer>
    <experiments>3</experiments>
</comment>
<comment type="interaction">
    <interactant intactId="EBI-6942903">
        <id>Q96BA8</id>
    </interactant>
    <interactant intactId="EBI-2339195">
        <id>Q9P0S9</id>
        <label>TMEM14C</label>
    </interactant>
    <organismsDiffer>false</organismsDiffer>
    <experiments>5</experiments>
</comment>
<comment type="interaction">
    <interactant intactId="EBI-6942903">
        <id>Q96BA8</id>
    </interactant>
    <interactant intactId="EBI-741829">
        <id>Q96HH6</id>
        <label>TMEM19</label>
    </interactant>
    <organismsDiffer>false</organismsDiffer>
    <experiments>3</experiments>
</comment>
<comment type="interaction">
    <interactant intactId="EBI-6942903">
        <id>Q96BA8</id>
    </interactant>
    <interactant intactId="EBI-12274070">
        <id>Q969S6</id>
        <label>TMEM203</label>
    </interactant>
    <organismsDiffer>false</organismsDiffer>
    <experiments>3</experiments>
</comment>
<comment type="interaction">
    <interactant intactId="EBI-6942903">
        <id>Q96BA8</id>
    </interactant>
    <interactant intactId="EBI-12876824">
        <id>Q9BTX3</id>
        <label>TMEM208</label>
    </interactant>
    <organismsDiffer>false</organismsDiffer>
    <experiments>3</experiments>
</comment>
<comment type="interaction">
    <interactant intactId="EBI-6942903">
        <id>Q96BA8</id>
    </interactant>
    <interactant intactId="EBI-10173151">
        <id>A2RU14</id>
        <label>TMEM218</label>
    </interactant>
    <organismsDiffer>false</organismsDiffer>
    <experiments>7</experiments>
</comment>
<comment type="interaction">
    <interactant intactId="EBI-6942903">
        <id>Q96BA8</id>
    </interactant>
    <interactant intactId="EBI-347385">
        <id>Q9H0R3</id>
        <label>TMEM222</label>
    </interactant>
    <organismsDiffer>false</organismsDiffer>
    <experiments>3</experiments>
</comment>
<comment type="interaction">
    <interactant intactId="EBI-6942903">
        <id>Q96BA8</id>
    </interactant>
    <interactant intactId="EBI-12195227">
        <id>Q8NBD8</id>
        <label>TMEM229B</label>
    </interactant>
    <organismsDiffer>false</organismsDiffer>
    <experiments>3</experiments>
</comment>
<comment type="interaction">
    <interactant intactId="EBI-6942903">
        <id>Q96BA8</id>
    </interactant>
    <interactant intactId="EBI-8642211">
        <id>Q8WY98</id>
        <label>TMEM234</label>
    </interactant>
    <organismsDiffer>false</organismsDiffer>
    <experiments>3</experiments>
</comment>
<comment type="interaction">
    <interactant intactId="EBI-6942903">
        <id>Q96BA8</id>
    </interactant>
    <interactant intactId="EBI-11528917">
        <id>Q8WW34-2</id>
        <label>TMEM239</label>
    </interactant>
    <organismsDiffer>false</organismsDiffer>
    <experiments>3</experiments>
</comment>
<comment type="interaction">
    <interactant intactId="EBI-6942903">
        <id>Q96BA8</id>
    </interactant>
    <interactant intactId="EBI-12366453">
        <id>P56557</id>
        <label>TMEM50B</label>
    </interactant>
    <organismsDiffer>false</organismsDiffer>
    <experiments>3</experiments>
</comment>
<comment type="interaction">
    <interactant intactId="EBI-6942903">
        <id>Q96BA8</id>
    </interactant>
    <interactant intactId="EBI-12015604">
        <id>Q8N2M4</id>
        <label>TMEM86A</label>
    </interactant>
    <organismsDiffer>false</organismsDiffer>
    <experiments>3</experiments>
</comment>
<comment type="interaction">
    <interactant intactId="EBI-6942903">
        <id>Q96BA8</id>
    </interactant>
    <interactant intactId="EBI-359977">
        <id>P01375</id>
        <label>TNF</label>
    </interactant>
    <organismsDiffer>false</organismsDiffer>
    <experiments>3</experiments>
</comment>
<comment type="interaction">
    <interactant intactId="EBI-6942903">
        <id>Q96BA8</id>
    </interactant>
    <interactant intactId="EBI-717441">
        <id>O14798</id>
        <label>TNFRSF10C</label>
    </interactant>
    <organismsDiffer>false</organismsDiffer>
    <experiments>3</experiments>
</comment>
<comment type="interaction">
    <interactant intactId="EBI-6942903">
        <id>Q96BA8</id>
    </interactant>
    <interactant intactId="EBI-12003398">
        <id>Q9H2S6-2</id>
        <label>TNMD</label>
    </interactant>
    <organismsDiffer>false</organismsDiffer>
    <experiments>3</experiments>
</comment>
<comment type="interaction">
    <interactant intactId="EBI-6942903">
        <id>Q96BA8</id>
    </interactant>
    <interactant intactId="EBI-11996766">
        <id>Q8N609</id>
        <label>TRAM1L1</label>
    </interactant>
    <organismsDiffer>false</organismsDiffer>
    <experiments>3</experiments>
</comment>
<comment type="interaction">
    <interactant intactId="EBI-6942903">
        <id>Q96BA8</id>
    </interactant>
    <interactant intactId="EBI-3914288">
        <id>O60636</id>
        <label>TSPAN2</label>
    </interactant>
    <organismsDiffer>false</organismsDiffer>
    <experiments>3</experiments>
</comment>
<comment type="interaction">
    <interactant intactId="EBI-6942903">
        <id>Q96BA8</id>
    </interactant>
    <interactant intactId="EBI-6623146">
        <id>P30536</id>
        <label>TSPO</label>
    </interactant>
    <organismsDiffer>false</organismsDiffer>
    <experiments>7</experiments>
</comment>
<comment type="interaction">
    <interactant intactId="EBI-6942903">
        <id>Q96BA8</id>
    </interactant>
    <interactant intactId="EBI-12195249">
        <id>Q5TGU0</id>
        <label>TSPO2</label>
    </interactant>
    <organismsDiffer>false</organismsDiffer>
    <experiments>5</experiments>
</comment>
<comment type="interaction">
    <interactant intactId="EBI-6942903">
        <id>Q96BA8</id>
    </interactant>
    <interactant intactId="EBI-2819725">
        <id>Q9Y5Z9</id>
        <label>UBIAD1</label>
    </interactant>
    <organismsDiffer>false</organismsDiffer>
    <experiments>3</experiments>
</comment>
<comment type="interaction">
    <interactant intactId="EBI-6942903">
        <id>Q96BA8</id>
    </interactant>
    <interactant intactId="EBI-4401271">
        <id>Q9H1C4</id>
        <label>UNC93B1</label>
    </interactant>
    <organismsDiffer>false</organismsDiffer>
    <experiments>3</experiments>
</comment>
<comment type="interaction">
    <interactant intactId="EBI-6942903">
        <id>Q96BA8</id>
    </interactant>
    <interactant intactId="EBI-12097582">
        <id>P23763-3</id>
        <label>VAMP1</label>
    </interactant>
    <organismsDiffer>false</organismsDiffer>
    <experiments>3</experiments>
</comment>
<comment type="interaction">
    <interactant intactId="EBI-6942903">
        <id>Q96BA8</id>
    </interactant>
    <interactant intactId="EBI-520113">
        <id>P63027</id>
        <label>VAMP2</label>
    </interactant>
    <organismsDiffer>false</organismsDiffer>
    <experiments>3</experiments>
</comment>
<comment type="interaction">
    <interactant intactId="EBI-6942903">
        <id>Q96BA8</id>
    </interactant>
    <interactant intactId="EBI-6256462">
        <id>Q9BQB6</id>
        <label>VKORC1</label>
    </interactant>
    <organismsDiffer>false</organismsDiffer>
    <experiments>3</experiments>
</comment>
<comment type="interaction">
    <interactant intactId="EBI-6942903">
        <id>Q96BA8</id>
    </interactant>
    <interactant intactId="EBI-723529">
        <id>Q14508</id>
        <label>WFDC2</label>
    </interactant>
    <organismsDiffer>false</organismsDiffer>
    <experiments>3</experiments>
</comment>
<comment type="interaction">
    <interactant intactId="EBI-6942903">
        <id>Q96BA8</id>
    </interactant>
    <interactant intactId="EBI-751210">
        <id>Q96EC8</id>
        <label>YIPF6</label>
    </interactant>
    <organismsDiffer>false</organismsDiffer>
    <experiments>3</experiments>
</comment>
<comment type="interaction">
    <interactant intactId="EBI-6942903">
        <id>Q96BA8</id>
    </interactant>
    <interactant intactId="EBI-12837904">
        <id>Q96MV8</id>
        <label>ZDHHC15</label>
    </interactant>
    <organismsDiffer>false</organismsDiffer>
    <experiments>5</experiments>
</comment>
<comment type="interaction">
    <interactant intactId="EBI-6942903">
        <id>Q96BA8</id>
    </interactant>
    <interactant intactId="EBI-10268111">
        <id>Q8N966</id>
        <label>ZDHHC22</label>
    </interactant>
    <organismsDiffer>false</organismsDiffer>
    <experiments>3</experiments>
</comment>
<comment type="interaction">
    <interactant intactId="EBI-6942903">
        <id>Q96BA8</id>
    </interactant>
    <interactant intactId="EBI-718439">
        <id>O95159</id>
        <label>ZFPL1</label>
    </interactant>
    <organismsDiffer>false</organismsDiffer>
    <experiments>5</experiments>
</comment>
<comment type="subcellular location">
    <molecule>Cyclic AMP-responsive element-binding protein 3-like protein 1</molecule>
    <subcellularLocation>
        <location evidence="6 7 11">Endoplasmic reticulum membrane</location>
        <topology>Single-pass type II membrane protein</topology>
    </subcellularLocation>
    <text evidence="6 7 8 11">ER membrane resident protein. Upon ER stress, translocated to the Golgi apparatus where it is cleaved. The cytosolic N-terminal fragment (processed cyclic AMP-responsive element-binding protein 3-like protein 1) is transported into the nucleus.</text>
</comment>
<comment type="subcellular location">
    <molecule>Processed cyclic AMP-responsive element-binding protein 3-like protein 1</molecule>
    <subcellularLocation>
        <location evidence="10 11">Nucleus</location>
    </subcellularLocation>
    <text evidence="6 8 10 11">Upon ER stress or DNA damage, transported into the nucleus.</text>
</comment>
<comment type="alternative products">
    <event type="alternative splicing"/>
    <isoform>
        <id>Q96BA8-1</id>
        <name>1</name>
        <sequence type="displayed"/>
    </isoform>
    <isoform>
        <id>Q96BA8-2</id>
        <name>2</name>
        <name>OASISv1</name>
        <sequence type="described" ref="VSP_025632"/>
    </isoform>
</comment>
<comment type="tissue specificity">
    <text evidence="6">Expressed in several tissues, with highest levels in pancreas and prostate. Expressed at relatively lower levels in brain.</text>
</comment>
<comment type="PTM">
    <text evidence="7 8 11 12">Upon ER stress or DNA damage, translocated to the Golgi apparatus, where it is processed by regulated intramembrane proteolysis (RIP) to release the cytosol-facing N-terminal transcription factor domain. The cleavage is performed sequentially by site-1 and site-2 proteases (S1P/MBTPS1 and S2P/MBTPS2) (PubMed:16417584, PubMed:21767813, PubMed:25310401, PubMed:27499293). RIP is induced by TGFB1 and ceramide (PubMed:25310401, PubMed:27499293).</text>
</comment>
<comment type="PTM">
    <text evidence="2">N-glycosylated.</text>
</comment>
<comment type="PTM">
    <text evidence="9">Ubiquitinated by HRD1/SYVN1; undergoes 'Lys-48'-linked ubiquitination, followed by rapid proteasomal degradation under normal conditions. Upon ER stress, SYVN1 E3 ubiquitin-protein ligase dissociates from its substrate, ubiquitination does not occur and CREB3L1 is stabilized.</text>
</comment>
<comment type="disease" evidence="10">
    <disease id="DI-04377">
        <name>Osteogenesis imperfecta 16</name>
        <acronym>OI16</acronym>
        <description>An autosomal recessive form of osteogenesis imperfecta, a disorder of bone formation characterized by low bone mass, bone fragility and susceptibility to fractures after minimal trauma. Disease severity ranges from very mild forms without fractures to intrauterine fractures and perinatal lethality. Extraskeletal manifestations, which affect a variable number of patients, are dentinogenesis imperfecta, hearing loss, and blue sclerae. OI16 is a severe form.</description>
        <dbReference type="MIM" id="616229"/>
    </disease>
    <text evidence="10">The disease may be caused by variants affecting the gene represented in this entry. OI16 affected patients show a genomic deletion encompassing CREB3L1 and the first exon of DGKZ. The absence of this exon does not affect all DGKZ isoforms, some are still produced at normal level. It cannot be ruled out that DGKZ could contribute to the phenotype, but in view of its role in bone formation, CREB3L1 is a strong OI16-causing candidate (PubMed:24079343). This hypothesis is corroborated by the observation of CREB3L1 knockout mice which exhibit features reminiscent of severe human osteogenesis imperfecta.</text>
</comment>
<comment type="similarity">
    <text evidence="15">Belongs to the bZIP family. ATF subfamily.</text>
</comment>
<comment type="sequence caution" evidence="15">
    <conflict type="erroneous initiation">
        <sequence resource="EMBL-CDS" id="BAC11681"/>
    </conflict>
    <text>Truncated N-terminus.</text>
</comment>
<gene>
    <name evidence="16" type="primary">CREB3L1</name>
    <name evidence="13" type="synonym">OASIS</name>
    <name type="ORF">PSEC0238</name>
</gene>
<protein>
    <recommendedName>
        <fullName>Cyclic AMP-responsive element-binding protein 3-like protein 1</fullName>
        <shortName>cAMP-responsive element-binding protein 3-like protein 1</shortName>
    </recommendedName>
    <alternativeName>
        <fullName>Old astrocyte specifically-induced substance</fullName>
        <shortName evidence="13">OASIS</shortName>
    </alternativeName>
    <component>
        <recommendedName>
            <fullName>Processed cyclic AMP-responsive element-binding protein 3-like protein 1</fullName>
        </recommendedName>
    </component>
</protein>
<proteinExistence type="evidence at protein level"/>
<organism>
    <name type="scientific">Homo sapiens</name>
    <name type="common">Human</name>
    <dbReference type="NCBI Taxonomy" id="9606"/>
    <lineage>
        <taxon>Eukaryota</taxon>
        <taxon>Metazoa</taxon>
        <taxon>Chordata</taxon>
        <taxon>Craniata</taxon>
        <taxon>Vertebrata</taxon>
        <taxon>Euteleostomi</taxon>
        <taxon>Mammalia</taxon>
        <taxon>Eutheria</taxon>
        <taxon>Euarchontoglires</taxon>
        <taxon>Primates</taxon>
        <taxon>Haplorrhini</taxon>
        <taxon>Catarrhini</taxon>
        <taxon>Hominidae</taxon>
        <taxon>Homo</taxon>
    </lineage>
</organism>
<keyword id="KW-0010">Activator</keyword>
<keyword id="KW-0025">Alternative splicing</keyword>
<keyword id="KW-0217">Developmental protein</keyword>
<keyword id="KW-0238">DNA-binding</keyword>
<keyword id="KW-0256">Endoplasmic reticulum</keyword>
<keyword id="KW-0325">Glycoprotein</keyword>
<keyword id="KW-0945">Host-virus interaction</keyword>
<keyword id="KW-1017">Isopeptide bond</keyword>
<keyword id="KW-0472">Membrane</keyword>
<keyword id="KW-0539">Nucleus</keyword>
<keyword id="KW-1065">Osteogenesis imperfecta</keyword>
<keyword id="KW-1267">Proteomics identification</keyword>
<keyword id="KW-1185">Reference proteome</keyword>
<keyword id="KW-0735">Signal-anchor</keyword>
<keyword id="KW-0804">Transcription</keyword>
<keyword id="KW-0805">Transcription regulation</keyword>
<keyword id="KW-0812">Transmembrane</keyword>
<keyword id="KW-1133">Transmembrane helix</keyword>
<keyword id="KW-0832">Ubl conjugation</keyword>
<keyword id="KW-0834">Unfolded protein response</keyword>
<evidence type="ECO:0000250" key="1">
    <source>
        <dbReference type="UniProtKB" id="P18850"/>
    </source>
</evidence>
<evidence type="ECO:0000250" key="2">
    <source>
        <dbReference type="UniProtKB" id="Q9Z125"/>
    </source>
</evidence>
<evidence type="ECO:0000255" key="3"/>
<evidence type="ECO:0000255" key="4">
    <source>
        <dbReference type="PROSITE-ProRule" id="PRU00978"/>
    </source>
</evidence>
<evidence type="ECO:0000256" key="5">
    <source>
        <dbReference type="SAM" id="MobiDB-lite"/>
    </source>
</evidence>
<evidence type="ECO:0000269" key="6">
    <source>
    </source>
</evidence>
<evidence type="ECO:0000269" key="7">
    <source>
    </source>
</evidence>
<evidence type="ECO:0000269" key="8">
    <source>
    </source>
</evidence>
<evidence type="ECO:0000269" key="9">
    <source>
    </source>
</evidence>
<evidence type="ECO:0000269" key="10">
    <source>
    </source>
</evidence>
<evidence type="ECO:0000269" key="11">
    <source>
    </source>
</evidence>
<evidence type="ECO:0000269" key="12">
    <source>
    </source>
</evidence>
<evidence type="ECO:0000303" key="13">
    <source>
    </source>
</evidence>
<evidence type="ECO:0000303" key="14">
    <source>
    </source>
</evidence>
<evidence type="ECO:0000305" key="15"/>
<evidence type="ECO:0000312" key="16">
    <source>
        <dbReference type="HGNC" id="HGNC:18856"/>
    </source>
</evidence>
<evidence type="ECO:0007744" key="17">
    <source>
    </source>
</evidence>
<sequence>MDAVLEPFPADRLFPGSSFLDLGDLNESDFLNNAHFPEHLDHFTENMEDFSNDLFSSFFDDPVLDEKSPLLDMELDSPTPGIQAEHSYSLSGDSAPQSPLVPIKMEDTTQDAEHGAWALGHKLCSIMVKQEQSPELPVDPLAAPSAMAAAAAMATTPLLGLSPLSRLPIPHQAPGEMTQLPVIKAEPLEVNQFLKVTPEDLVQMPPTPPSSHGSDSDGSQSPRSLPPSSPVRPMARSSTAISTSPLLTAPHKLQGTSGPLLLTEEEKRTLIAEGYPIPTKLPLTKAEEKALKRVRRKIKNKISAQESRRKKKEYVECLEKKVETFTSENNELWKKVETLENANRTLLQQLQKLQTLVTNKISRPYKMAATQTGTCLMVAALCFVLVLGSLVPCLPEFSSGSQTVKEDPLAADGVYTASQMPSRSLLFYDDGAGLWEDGRSTLLPMEPPDGWEINPGGPAEQRPRDHLQHDHLDSTHETTKYLSEAWPKDGGNGTSPDFSHSKEWFHDRDLGPNTTIKLS</sequence>
<accession>Q96BA8</accession>
<accession>Q8N2D5</accession>
<accession>Q96CP0</accession>
<reference key="1">
    <citation type="journal article" date="2002" name="Biochem. Biophys. Res. Commun.">
        <title>OASIS is a transcriptional activator of CREB/ATF family with a transmembrane domain.</title>
        <authorList>
            <person name="Omori Y."/>
            <person name="Imai J."/>
            <person name="Suzuki Y."/>
            <person name="Watanabe S."/>
            <person name="Tanigami A."/>
            <person name="Sugano S."/>
        </authorList>
    </citation>
    <scope>NUCLEOTIDE SEQUENCE [MRNA] (ISOFORM 1)</scope>
    <scope>DNA-BINDING</scope>
    <scope>ALTERNATIVE SPLICING (ISOFORM 2)</scope>
    <scope>SUBCELLULAR LOCATION</scope>
    <scope>TISSUE SPECIFICITY</scope>
</reference>
<reference key="2">
    <citation type="journal article" date="2004" name="Genome Res.">
        <title>The status, quality, and expansion of the NIH full-length cDNA project: the Mammalian Gene Collection (MGC).</title>
        <authorList>
            <consortium name="The MGC Project Team"/>
        </authorList>
    </citation>
    <scope>NUCLEOTIDE SEQUENCE [LARGE SCALE MRNA] (ISOFORM 1)</scope>
    <source>
        <tissue>Colon</tissue>
    </source>
</reference>
<reference key="3">
    <citation type="journal article" date="2004" name="Nat. Genet.">
        <title>Complete sequencing and characterization of 21,243 full-length human cDNAs.</title>
        <authorList>
            <person name="Ota T."/>
            <person name="Suzuki Y."/>
            <person name="Nishikawa T."/>
            <person name="Otsuki T."/>
            <person name="Sugiyama T."/>
            <person name="Irie R."/>
            <person name="Wakamatsu A."/>
            <person name="Hayashi K."/>
            <person name="Sato H."/>
            <person name="Nagai K."/>
            <person name="Kimura K."/>
            <person name="Makita H."/>
            <person name="Sekine M."/>
            <person name="Obayashi M."/>
            <person name="Nishi T."/>
            <person name="Shibahara T."/>
            <person name="Tanaka T."/>
            <person name="Ishii S."/>
            <person name="Yamamoto J."/>
            <person name="Saito K."/>
            <person name="Kawai Y."/>
            <person name="Isono Y."/>
            <person name="Nakamura Y."/>
            <person name="Nagahari K."/>
            <person name="Murakami K."/>
            <person name="Yasuda T."/>
            <person name="Iwayanagi T."/>
            <person name="Wagatsuma M."/>
            <person name="Shiratori A."/>
            <person name="Sudo H."/>
            <person name="Hosoiri T."/>
            <person name="Kaku Y."/>
            <person name="Kodaira H."/>
            <person name="Kondo H."/>
            <person name="Sugawara M."/>
            <person name="Takahashi M."/>
            <person name="Kanda K."/>
            <person name="Yokoi T."/>
            <person name="Furuya T."/>
            <person name="Kikkawa E."/>
            <person name="Omura Y."/>
            <person name="Abe K."/>
            <person name="Kamihara K."/>
            <person name="Katsuta N."/>
            <person name="Sato K."/>
            <person name="Tanikawa M."/>
            <person name="Yamazaki M."/>
            <person name="Ninomiya K."/>
            <person name="Ishibashi T."/>
            <person name="Yamashita H."/>
            <person name="Murakawa K."/>
            <person name="Fujimori K."/>
            <person name="Tanai H."/>
            <person name="Kimata M."/>
            <person name="Watanabe M."/>
            <person name="Hiraoka S."/>
            <person name="Chiba Y."/>
            <person name="Ishida S."/>
            <person name="Ono Y."/>
            <person name="Takiguchi S."/>
            <person name="Watanabe S."/>
            <person name="Yosida M."/>
            <person name="Hotuta T."/>
            <person name="Kusano J."/>
            <person name="Kanehori K."/>
            <person name="Takahashi-Fujii A."/>
            <person name="Hara H."/>
            <person name="Tanase T.-O."/>
            <person name="Nomura Y."/>
            <person name="Togiya S."/>
            <person name="Komai F."/>
            <person name="Hara R."/>
            <person name="Takeuchi K."/>
            <person name="Arita M."/>
            <person name="Imose N."/>
            <person name="Musashino K."/>
            <person name="Yuuki H."/>
            <person name="Oshima A."/>
            <person name="Sasaki N."/>
            <person name="Aotsuka S."/>
            <person name="Yoshikawa Y."/>
            <person name="Matsunawa H."/>
            <person name="Ichihara T."/>
            <person name="Shiohata N."/>
            <person name="Sano S."/>
            <person name="Moriya S."/>
            <person name="Momiyama H."/>
            <person name="Satoh N."/>
            <person name="Takami S."/>
            <person name="Terashima Y."/>
            <person name="Suzuki O."/>
            <person name="Nakagawa S."/>
            <person name="Senoh A."/>
            <person name="Mizoguchi H."/>
            <person name="Goto Y."/>
            <person name="Shimizu F."/>
            <person name="Wakebe H."/>
            <person name="Hishigaki H."/>
            <person name="Watanabe T."/>
            <person name="Sugiyama A."/>
            <person name="Takemoto M."/>
            <person name="Kawakami B."/>
            <person name="Yamazaki M."/>
            <person name="Watanabe K."/>
            <person name="Kumagai A."/>
            <person name="Itakura S."/>
            <person name="Fukuzumi Y."/>
            <person name="Fujimori Y."/>
            <person name="Komiyama M."/>
            <person name="Tashiro H."/>
            <person name="Tanigami A."/>
            <person name="Fujiwara T."/>
            <person name="Ono T."/>
            <person name="Yamada K."/>
            <person name="Fujii Y."/>
            <person name="Ozaki K."/>
            <person name="Hirao M."/>
            <person name="Ohmori Y."/>
            <person name="Kawabata A."/>
            <person name="Hikiji T."/>
            <person name="Kobatake N."/>
            <person name="Inagaki H."/>
            <person name="Ikema Y."/>
            <person name="Okamoto S."/>
            <person name="Okitani R."/>
            <person name="Kawakami T."/>
            <person name="Noguchi S."/>
            <person name="Itoh T."/>
            <person name="Shigeta K."/>
            <person name="Senba T."/>
            <person name="Matsumura K."/>
            <person name="Nakajima Y."/>
            <person name="Mizuno T."/>
            <person name="Morinaga M."/>
            <person name="Sasaki M."/>
            <person name="Togashi T."/>
            <person name="Oyama M."/>
            <person name="Hata H."/>
            <person name="Watanabe M."/>
            <person name="Komatsu T."/>
            <person name="Mizushima-Sugano J."/>
            <person name="Satoh T."/>
            <person name="Shirai Y."/>
            <person name="Takahashi Y."/>
            <person name="Nakagawa K."/>
            <person name="Okumura K."/>
            <person name="Nagase T."/>
            <person name="Nomura N."/>
            <person name="Kikuchi H."/>
            <person name="Masuho Y."/>
            <person name="Yamashita R."/>
            <person name="Nakai K."/>
            <person name="Yada T."/>
            <person name="Nakamura Y."/>
            <person name="Ohara O."/>
            <person name="Isogai T."/>
            <person name="Sugano S."/>
        </authorList>
    </citation>
    <scope>NUCLEOTIDE SEQUENCE [LARGE SCALE MRNA] OF 253-519</scope>
    <source>
        <tissue>Embryo</tissue>
    </source>
</reference>
<reference key="4">
    <citation type="journal article" date="2006" name="J. Neurochem.">
        <title>Cleavage of the membrane-bound transcription factor OASIS in response to endoplasmic reticulum stress.</title>
        <authorList>
            <person name="Murakami T."/>
            <person name="Kondo S."/>
            <person name="Ogata M."/>
            <person name="Kanemoto S."/>
            <person name="Saito A."/>
            <person name="Wanaka A."/>
            <person name="Imaizumi K."/>
        </authorList>
    </citation>
    <scope>SUBCELLULAR LOCATION</scope>
    <scope>MUTAGENESIS OF PRO-392; ARG-423 AND LEU-426</scope>
    <scope>PROTEOLYTIC PROCESSING</scope>
</reference>
<reference key="5">
    <citation type="journal article" date="2011" name="Cell Host Microbe">
        <title>The membrane-bound transcription factor CREB3L1 is activated in response to virus infection to inhibit proliferation of virus-infected cells.</title>
        <authorList>
            <person name="Denard B."/>
            <person name="Seemann J."/>
            <person name="Chen Q."/>
            <person name="Gay A."/>
            <person name="Huang H."/>
            <person name="Chen Y."/>
            <person name="Ye J."/>
        </authorList>
    </citation>
    <scope>FUNCTION IN VIRAL INFECTIONS</scope>
    <scope>IDENTIFICATION OF TARGET GENES</scope>
    <scope>SUBCELLULAR LOCATION</scope>
    <scope>PROTEOLYTIC CLEAVAGE</scope>
    <scope>MUTAGENESIS OF PRO-392; PRO-395 AND ARG-423</scope>
</reference>
<reference key="6">
    <citation type="journal article" date="2012" name="Cell Death Differ.">
        <title>Activation of OASIS family, ER stress transducers, is dependent on its stabilization.</title>
        <authorList>
            <person name="Kondo S."/>
            <person name="Hino S.I."/>
            <person name="Saito A."/>
            <person name="Kanemoto S."/>
            <person name="Kawasaki N."/>
            <person name="Asada R."/>
            <person name="Izumi S."/>
            <person name="Iwamoto H."/>
            <person name="Oki M."/>
            <person name="Miyagi H."/>
            <person name="Kaneko M."/>
            <person name="Nomura Y."/>
            <person name="Urano F."/>
            <person name="Imaizumi K."/>
        </authorList>
    </citation>
    <scope>UBIQUITINATION</scope>
</reference>
<reference key="7">
    <citation type="journal article" date="2014" name="PLoS ONE">
        <title>Sustained induction of collagen synthesis by TGF-beta requires regulated intramembrane proteolysis of CREB3L1.</title>
        <authorList>
            <person name="Chen Q."/>
            <person name="Lee C.E."/>
            <person name="Denard B."/>
            <person name="Ye J."/>
        </authorList>
    </citation>
    <scope>FUNCTION</scope>
    <scope>SUBCELLULAR LOCATION</scope>
    <scope>PROTEOLYTIC PROCESSING</scope>
    <scope>INTERACTION WITH SMAD4</scope>
</reference>
<reference key="8">
    <citation type="journal article" date="2016" name="Mol. Cell">
        <title>Inverting the topology of a transmembrane protein by regulating the translocation of the first transmembrane helix.</title>
        <authorList>
            <person name="Chen Q."/>
            <person name="Denard B."/>
            <person name="Lee C.E."/>
            <person name="Han S."/>
            <person name="Ye J.S."/>
            <person name="Ye J."/>
        </authorList>
    </citation>
    <scope>PROTEOLYTIC PROCESSING</scope>
</reference>
<reference key="9">
    <citation type="journal article" date="2013" name="Orphanet J. Rare Dis.">
        <title>Deficiency for the ER-stress transducer OASIS causes severe recessive osteogenesis imperfecta in humans.</title>
        <authorList>
            <person name="Symoens S."/>
            <person name="Malfait F."/>
            <person name="D'hondt S."/>
            <person name="Callewaert B."/>
            <person name="Dheedene A."/>
            <person name="Steyaert W."/>
            <person name="Baechinger H.P."/>
            <person name="De Paepe A."/>
            <person name="Kayserili H."/>
            <person name="Coucke P.J."/>
        </authorList>
    </citation>
    <scope>POSSIBLE INVOLVEMENT IN OI16</scope>
    <scope>SUBCELLULAR LOCATION</scope>
</reference>
<reference key="10">
    <citation type="journal article" date="2017" name="Nat. Struct. Mol. Biol.">
        <title>Site-specific mapping of the human SUMO proteome reveals co-modification with phosphorylation.</title>
        <authorList>
            <person name="Hendriks I.A."/>
            <person name="Lyon D."/>
            <person name="Young C."/>
            <person name="Jensen L.J."/>
            <person name="Vertegaal A.C."/>
            <person name="Nielsen M.L."/>
        </authorList>
    </citation>
    <scope>SUMOYLATION [LARGE SCALE ANALYSIS] AT LYS-184</scope>
    <scope>IDENTIFICATION BY MASS SPECTROMETRY [LARGE SCALE ANALYSIS]</scope>
</reference>
<feature type="chain" id="PRO_0000288064" description="Cyclic AMP-responsive element-binding protein 3-like protein 1">
    <location>
        <begin position="1"/>
        <end position="519"/>
    </location>
</feature>
<feature type="chain" id="PRO_0000296206" description="Processed cyclic AMP-responsive element-binding protein 3-like protein 1">
    <location>
        <begin position="1"/>
        <end status="unknown"/>
    </location>
</feature>
<feature type="topological domain" description="Cytoplasmic" evidence="3">
    <location>
        <begin position="1"/>
        <end position="374"/>
    </location>
</feature>
<feature type="transmembrane region" description="Helical; Signal-anchor for type II membrane protein" evidence="3">
    <location>
        <begin position="375"/>
        <end position="395"/>
    </location>
</feature>
<feature type="topological domain" description="Lumenal" evidence="3">
    <location>
        <begin position="396"/>
        <end position="519"/>
    </location>
</feature>
<feature type="domain" description="bZIP" evidence="4">
    <location>
        <begin position="290"/>
        <end position="353"/>
    </location>
</feature>
<feature type="region of interest" description="Required for transcriptional activation">
    <location>
        <begin position="1"/>
        <end position="60"/>
    </location>
</feature>
<feature type="region of interest" description="Disordered" evidence="5">
    <location>
        <begin position="71"/>
        <end position="98"/>
    </location>
</feature>
<feature type="region of interest" description="Disordered" evidence="5">
    <location>
        <begin position="200"/>
        <end position="259"/>
    </location>
</feature>
<feature type="region of interest" description="Basic motif" evidence="4">
    <location>
        <begin position="292"/>
        <end position="321"/>
    </location>
</feature>
<feature type="region of interest" description="Leucine-zipper" evidence="4">
    <location>
        <begin position="332"/>
        <end position="353"/>
    </location>
</feature>
<feature type="region of interest" description="Disordered" evidence="5">
    <location>
        <begin position="484"/>
        <end position="519"/>
    </location>
</feature>
<feature type="short sequence motif" description="MBTPS2 recognition" evidence="14">
    <location>
        <begin position="392"/>
        <end position="395"/>
    </location>
</feature>
<feature type="short sequence motif" description="MBTPS1 recognition" evidence="14">
    <location>
        <begin position="423"/>
        <end position="426"/>
    </location>
</feature>
<feature type="compositionally biased region" description="Polar residues" evidence="5">
    <location>
        <begin position="86"/>
        <end position="97"/>
    </location>
</feature>
<feature type="compositionally biased region" description="Low complexity" evidence="5">
    <location>
        <begin position="210"/>
        <end position="223"/>
    </location>
</feature>
<feature type="compositionally biased region" description="Polar residues" evidence="5">
    <location>
        <begin position="236"/>
        <end position="246"/>
    </location>
</feature>
<feature type="compositionally biased region" description="Basic and acidic residues" evidence="5">
    <location>
        <begin position="499"/>
        <end position="510"/>
    </location>
</feature>
<feature type="site" description="Cleavage; by MBTPS1" evidence="1">
    <location>
        <begin position="426"/>
        <end position="427"/>
    </location>
</feature>
<feature type="glycosylation site" description="N-linked (GlcNAc...) asparagine" evidence="3">
    <location>
        <position position="492"/>
    </location>
</feature>
<feature type="glycosylation site" description="N-linked (GlcNAc...) asparagine" evidence="3">
    <location>
        <position position="513"/>
    </location>
</feature>
<feature type="cross-link" description="Glycyl lysine isopeptide (Lys-Gly) (interchain with G-Cter in SUMO2)" evidence="17">
    <location>
        <position position="184"/>
    </location>
</feature>
<feature type="splice variant" id="VSP_025632" description="In isoform 2." evidence="15">
    <location>
        <begin position="111"/>
        <end position="198"/>
    </location>
</feature>
<feature type="sequence variant" id="VAR_032392" description="In dbSNP:rs35652107.">
    <original>A</original>
    <variation>T</variation>
    <location>
        <position position="411"/>
    </location>
</feature>
<feature type="mutagenesis site" description="Abolishes proteolytic cleavage by MBTPS2; when associated with A-395." evidence="8">
    <original>P</original>
    <variation>A</variation>
    <location>
        <position position="392"/>
    </location>
</feature>
<feature type="mutagenesis site" description="Abolishes proteolytic cleavage by MBTPS2." evidence="7">
    <original>P</original>
    <variation>L</variation>
    <location>
        <position position="392"/>
    </location>
</feature>
<feature type="mutagenesis site" description="Abolishes proteolytic cleavage by MBTPS2; when associated with A-392." evidence="8">
    <original>P</original>
    <variation>A</variation>
    <location>
        <position position="395"/>
    </location>
</feature>
<feature type="mutagenesis site" description="Abolishes proteolytic cleavage by MBTPS1." evidence="7 8">
    <original>R</original>
    <variation>A</variation>
    <location>
        <position position="423"/>
    </location>
</feature>
<feature type="mutagenesis site" description="Abolishes proteolytic cleavage by MBTPS1." evidence="7">
    <original>L</original>
    <variation>V</variation>
    <location>
        <position position="426"/>
    </location>
</feature>
<feature type="sequence conflict" description="In Ref. 2; AAH14097." evidence="15" ref="2">
    <original>A</original>
    <variation>P</variation>
    <location>
        <position position="249"/>
    </location>
</feature>
<dbReference type="EMBL" id="AB063321">
    <property type="protein sequence ID" value="BAC01278.1"/>
    <property type="molecule type" value="mRNA"/>
</dbReference>
<dbReference type="EMBL" id="BC014097">
    <property type="protein sequence ID" value="AAH14097.1"/>
    <property type="molecule type" value="mRNA"/>
</dbReference>
<dbReference type="EMBL" id="BC015781">
    <property type="protein sequence ID" value="AAH15781.1"/>
    <property type="molecule type" value="mRNA"/>
</dbReference>
<dbReference type="EMBL" id="AK075538">
    <property type="protein sequence ID" value="BAC11681.1"/>
    <property type="status" value="ALT_INIT"/>
    <property type="molecule type" value="mRNA"/>
</dbReference>
<dbReference type="CCDS" id="CCDS53620.1">
    <molecule id="Q96BA8-1"/>
</dbReference>
<dbReference type="RefSeq" id="NP_001412198.1">
    <molecule id="Q96BA8-2"/>
    <property type="nucleotide sequence ID" value="NM_001425269.1"/>
</dbReference>
<dbReference type="RefSeq" id="NP_443086.1">
    <molecule id="Q96BA8-1"/>
    <property type="nucleotide sequence ID" value="NM_052854.4"/>
</dbReference>
<dbReference type="SMR" id="Q96BA8"/>
<dbReference type="BioGRID" id="124786">
    <property type="interactions" value="251"/>
</dbReference>
<dbReference type="FunCoup" id="Q96BA8">
    <property type="interactions" value="2489"/>
</dbReference>
<dbReference type="IntAct" id="Q96BA8">
    <property type="interactions" value="200"/>
</dbReference>
<dbReference type="MINT" id="Q96BA8"/>
<dbReference type="STRING" id="9606.ENSP00000481956"/>
<dbReference type="GlyCosmos" id="Q96BA8">
    <property type="glycosylation" value="2 sites, No reported glycans"/>
</dbReference>
<dbReference type="GlyGen" id="Q96BA8">
    <property type="glycosylation" value="6 sites, 2 N-linked glycans (2 sites), 2 O-linked glycans (2 sites)"/>
</dbReference>
<dbReference type="iPTMnet" id="Q96BA8"/>
<dbReference type="PhosphoSitePlus" id="Q96BA8"/>
<dbReference type="BioMuta" id="CREB3L1"/>
<dbReference type="DMDM" id="74751763"/>
<dbReference type="jPOST" id="Q96BA8"/>
<dbReference type="MassIVE" id="Q96BA8"/>
<dbReference type="PaxDb" id="9606-ENSP00000481956"/>
<dbReference type="PeptideAtlas" id="Q96BA8"/>
<dbReference type="ProteomicsDB" id="76059">
    <molecule id="Q96BA8-1"/>
</dbReference>
<dbReference type="ProteomicsDB" id="76060">
    <molecule id="Q96BA8-2"/>
</dbReference>
<dbReference type="Antibodypedia" id="6395">
    <property type="antibodies" value="275 antibodies from 36 providers"/>
</dbReference>
<dbReference type="DNASU" id="90993"/>
<dbReference type="Ensembl" id="ENST00000621158.5">
    <molecule id="Q96BA8-1"/>
    <property type="protein sequence ID" value="ENSP00000481956.1"/>
    <property type="gene ID" value="ENSG00000157613.11"/>
</dbReference>
<dbReference type="GeneID" id="90993"/>
<dbReference type="KEGG" id="hsa:90993"/>
<dbReference type="MANE-Select" id="ENST00000621158.5">
    <property type="protein sequence ID" value="ENSP00000481956.1"/>
    <property type="RefSeq nucleotide sequence ID" value="NM_052854.4"/>
    <property type="RefSeq protein sequence ID" value="NP_443086.1"/>
</dbReference>
<dbReference type="UCSC" id="uc021qik.3">
    <molecule id="Q96BA8-1"/>
    <property type="organism name" value="human"/>
</dbReference>
<dbReference type="AGR" id="HGNC:18856"/>
<dbReference type="CTD" id="90993"/>
<dbReference type="DisGeNET" id="90993"/>
<dbReference type="GeneCards" id="CREB3L1"/>
<dbReference type="HGNC" id="HGNC:18856">
    <property type="gene designation" value="CREB3L1"/>
</dbReference>
<dbReference type="HPA" id="ENSG00000157613">
    <property type="expression patterns" value="Tissue enhanced (pancreas, salivary gland)"/>
</dbReference>
<dbReference type="MalaCards" id="CREB3L1"/>
<dbReference type="MIM" id="616215">
    <property type="type" value="gene"/>
</dbReference>
<dbReference type="MIM" id="616229">
    <property type="type" value="phenotype"/>
</dbReference>
<dbReference type="neXtProt" id="NX_Q96BA8"/>
<dbReference type="OpenTargets" id="ENSG00000157613"/>
<dbReference type="Orphanet" id="79105">
    <property type="disease" value="Myxofibrosarcoma"/>
</dbReference>
<dbReference type="Orphanet" id="216812">
    <property type="disease" value="Osteogenesis imperfecta type 3"/>
</dbReference>
<dbReference type="PharmGKB" id="PA134960108"/>
<dbReference type="VEuPathDB" id="HostDB:ENSG00000157613"/>
<dbReference type="eggNOG" id="KOG0709">
    <property type="taxonomic scope" value="Eukaryota"/>
</dbReference>
<dbReference type="GeneTree" id="ENSGT00940000159848"/>
<dbReference type="HOGENOM" id="CLU_037638_1_0_1"/>
<dbReference type="InParanoid" id="Q96BA8"/>
<dbReference type="OMA" id="MEHGAWA"/>
<dbReference type="OrthoDB" id="674948at2759"/>
<dbReference type="PAN-GO" id="Q96BA8">
    <property type="GO annotations" value="3 GO annotations based on evolutionary models"/>
</dbReference>
<dbReference type="PhylomeDB" id="Q96BA8"/>
<dbReference type="TreeFam" id="TF316079"/>
<dbReference type="PathwayCommons" id="Q96BA8"/>
<dbReference type="Reactome" id="R-HSA-8874211">
    <property type="pathway name" value="CREB3 factors activate genes"/>
</dbReference>
<dbReference type="SignaLink" id="Q96BA8"/>
<dbReference type="SIGNOR" id="Q96BA8"/>
<dbReference type="BioGRID-ORCS" id="90993">
    <property type="hits" value="12 hits in 1174 CRISPR screens"/>
</dbReference>
<dbReference type="ChiTaRS" id="CREB3L1">
    <property type="organism name" value="human"/>
</dbReference>
<dbReference type="GenomeRNAi" id="90993"/>
<dbReference type="Pharos" id="Q96BA8">
    <property type="development level" value="Tbio"/>
</dbReference>
<dbReference type="PRO" id="PR:Q96BA8"/>
<dbReference type="Proteomes" id="UP000005640">
    <property type="component" value="Chromosome 11"/>
</dbReference>
<dbReference type="RNAct" id="Q96BA8">
    <property type="molecule type" value="protein"/>
</dbReference>
<dbReference type="Bgee" id="ENSG00000157613">
    <property type="expression patterns" value="Expressed in nasal cavity epithelium and 162 other cell types or tissues"/>
</dbReference>
<dbReference type="ExpressionAtlas" id="Q96BA8">
    <property type="expression patterns" value="baseline and differential"/>
</dbReference>
<dbReference type="GO" id="GO:0000785">
    <property type="term" value="C:chromatin"/>
    <property type="evidence" value="ECO:0000314"/>
    <property type="project" value="BHF-UCL"/>
</dbReference>
<dbReference type="GO" id="GO:0005829">
    <property type="term" value="C:cytosol"/>
    <property type="evidence" value="ECO:0000314"/>
    <property type="project" value="HPA"/>
</dbReference>
<dbReference type="GO" id="GO:0005783">
    <property type="term" value="C:endoplasmic reticulum"/>
    <property type="evidence" value="ECO:0000314"/>
    <property type="project" value="ParkinsonsUK-UCL"/>
</dbReference>
<dbReference type="GO" id="GO:0005789">
    <property type="term" value="C:endoplasmic reticulum membrane"/>
    <property type="evidence" value="ECO:0007669"/>
    <property type="project" value="UniProtKB-SubCell"/>
</dbReference>
<dbReference type="GO" id="GO:0016020">
    <property type="term" value="C:membrane"/>
    <property type="evidence" value="ECO:0000314"/>
    <property type="project" value="UniProtKB"/>
</dbReference>
<dbReference type="GO" id="GO:0005654">
    <property type="term" value="C:nucleoplasm"/>
    <property type="evidence" value="ECO:0000314"/>
    <property type="project" value="HPA"/>
</dbReference>
<dbReference type="GO" id="GO:0005634">
    <property type="term" value="C:nucleus"/>
    <property type="evidence" value="ECO:0000314"/>
    <property type="project" value="UniProtKB"/>
</dbReference>
<dbReference type="GO" id="GO:0035497">
    <property type="term" value="F:cAMP response element binding"/>
    <property type="evidence" value="ECO:0000250"/>
    <property type="project" value="UniProtKB"/>
</dbReference>
<dbReference type="GO" id="GO:0003682">
    <property type="term" value="F:chromatin binding"/>
    <property type="evidence" value="ECO:0000250"/>
    <property type="project" value="ParkinsonsUK-UCL"/>
</dbReference>
<dbReference type="GO" id="GO:0001228">
    <property type="term" value="F:DNA-binding transcription activator activity, RNA polymerase II-specific"/>
    <property type="evidence" value="ECO:0000250"/>
    <property type="project" value="ParkinsonsUK-UCL"/>
</dbReference>
<dbReference type="GO" id="GO:0000981">
    <property type="term" value="F:DNA-binding transcription factor activity, RNA polymerase II-specific"/>
    <property type="evidence" value="ECO:0000247"/>
    <property type="project" value="NTNU_SB"/>
</dbReference>
<dbReference type="GO" id="GO:0001227">
    <property type="term" value="F:DNA-binding transcription repressor activity, RNA polymerase II-specific"/>
    <property type="evidence" value="ECO:0000314"/>
    <property type="project" value="BHF-UCL"/>
</dbReference>
<dbReference type="GO" id="GO:1990837">
    <property type="term" value="F:sequence-specific double-stranded DNA binding"/>
    <property type="evidence" value="ECO:0000314"/>
    <property type="project" value="ARUK-UCL"/>
</dbReference>
<dbReference type="GO" id="GO:0046332">
    <property type="term" value="F:SMAD binding"/>
    <property type="evidence" value="ECO:0000353"/>
    <property type="project" value="UniProtKB"/>
</dbReference>
<dbReference type="GO" id="GO:0000976">
    <property type="term" value="F:transcription cis-regulatory region binding"/>
    <property type="evidence" value="ECO:0000250"/>
    <property type="project" value="ParkinsonsUK-UCL"/>
</dbReference>
<dbReference type="GO" id="GO:0030968">
    <property type="term" value="P:endoplasmic reticulum unfolded protein response"/>
    <property type="evidence" value="ECO:0000250"/>
    <property type="project" value="UniProtKB"/>
</dbReference>
<dbReference type="GO" id="GO:0070278">
    <property type="term" value="P:extracellular matrix constituent secretion"/>
    <property type="evidence" value="ECO:0000250"/>
    <property type="project" value="UniProtKB"/>
</dbReference>
<dbReference type="GO" id="GO:0045892">
    <property type="term" value="P:negative regulation of DNA-templated transcription"/>
    <property type="evidence" value="ECO:0000314"/>
    <property type="project" value="BHF-UCL"/>
</dbReference>
<dbReference type="GO" id="GO:1902236">
    <property type="term" value="P:negative regulation of endoplasmic reticulum stress-induced intrinsic apoptotic signaling pathway"/>
    <property type="evidence" value="ECO:0000250"/>
    <property type="project" value="ParkinsonsUK-UCL"/>
</dbReference>
<dbReference type="GO" id="GO:0040037">
    <property type="term" value="P:negative regulation of fibroblast growth factor receptor signaling pathway"/>
    <property type="evidence" value="ECO:0000314"/>
    <property type="project" value="BHF-UCL"/>
</dbReference>
<dbReference type="GO" id="GO:0010629">
    <property type="term" value="P:negative regulation of gene expression"/>
    <property type="evidence" value="ECO:0000314"/>
    <property type="project" value="BHF-UCL"/>
</dbReference>
<dbReference type="GO" id="GO:1903671">
    <property type="term" value="P:negative regulation of sprouting angiogenesis"/>
    <property type="evidence" value="ECO:0000316"/>
    <property type="project" value="BHF-UCL"/>
</dbReference>
<dbReference type="GO" id="GO:0001649">
    <property type="term" value="P:osteoblast differentiation"/>
    <property type="evidence" value="ECO:0000250"/>
    <property type="project" value="UniProtKB"/>
</dbReference>
<dbReference type="GO" id="GO:0032967">
    <property type="term" value="P:positive regulation of collagen biosynthetic process"/>
    <property type="evidence" value="ECO:0000314"/>
    <property type="project" value="UniProtKB"/>
</dbReference>
<dbReference type="GO" id="GO:0045944">
    <property type="term" value="P:positive regulation of transcription by RNA polymerase II"/>
    <property type="evidence" value="ECO:0000250"/>
    <property type="project" value="BHF-UCL"/>
</dbReference>
<dbReference type="GO" id="GO:0006357">
    <property type="term" value="P:regulation of transcription by RNA polymerase II"/>
    <property type="evidence" value="ECO:0000318"/>
    <property type="project" value="GO_Central"/>
</dbReference>
<dbReference type="GO" id="GO:0034976">
    <property type="term" value="P:response to endoplasmic reticulum stress"/>
    <property type="evidence" value="ECO:0000250"/>
    <property type="project" value="ParkinsonsUK-UCL"/>
</dbReference>
<dbReference type="CDD" id="cd14689">
    <property type="entry name" value="bZIP_CREB3"/>
    <property type="match status" value="1"/>
</dbReference>
<dbReference type="FunFam" id="1.20.5.170:FF:000054">
    <property type="entry name" value="Cyclic AMP-responsive element-binding protein 3-like 2"/>
    <property type="match status" value="1"/>
</dbReference>
<dbReference type="Gene3D" id="1.20.5.170">
    <property type="match status" value="1"/>
</dbReference>
<dbReference type="InterPro" id="IPR004827">
    <property type="entry name" value="bZIP"/>
</dbReference>
<dbReference type="InterPro" id="IPR046347">
    <property type="entry name" value="bZIP_sf"/>
</dbReference>
<dbReference type="PANTHER" id="PTHR46004">
    <property type="entry name" value="CYCLIC AMP RESPONSE ELEMENT-BINDING PROTEIN A"/>
    <property type="match status" value="1"/>
</dbReference>
<dbReference type="PANTHER" id="PTHR46004:SF1">
    <property type="entry name" value="CYCLIC AMP-RESPONSIVE ELEMENT-BINDING PROTEIN 3-LIKE PROTEIN 1"/>
    <property type="match status" value="1"/>
</dbReference>
<dbReference type="Pfam" id="PF00170">
    <property type="entry name" value="bZIP_1"/>
    <property type="match status" value="1"/>
</dbReference>
<dbReference type="PRINTS" id="PR00041">
    <property type="entry name" value="LEUZIPPRCREB"/>
</dbReference>
<dbReference type="SMART" id="SM00338">
    <property type="entry name" value="BRLZ"/>
    <property type="match status" value="1"/>
</dbReference>
<dbReference type="SUPFAM" id="SSF57959">
    <property type="entry name" value="Leucine zipper domain"/>
    <property type="match status" value="1"/>
</dbReference>
<dbReference type="PROSITE" id="PS50217">
    <property type="entry name" value="BZIP"/>
    <property type="match status" value="1"/>
</dbReference>
<dbReference type="PROSITE" id="PS00036">
    <property type="entry name" value="BZIP_BASIC"/>
    <property type="match status" value="1"/>
</dbReference>
<name>CR3L1_HUMAN</name>